<feature type="initiator methionine" description="Removed" evidence="8 17 29 30 39 41 42 44">
    <location>
        <position position="1"/>
    </location>
</feature>
<feature type="chain" id="PRO_0000050499" description="Non-selective voltage-gated ion channel VDAC1">
    <location>
        <begin position="2"/>
        <end position="283"/>
    </location>
</feature>
<feature type="transmembrane region" description="Beta stranded" evidence="9 10">
    <location>
        <begin position="26"/>
        <end position="35"/>
    </location>
</feature>
<feature type="transmembrane region" description="Beta stranded" evidence="9 10">
    <location>
        <begin position="39"/>
        <end position="47"/>
    </location>
</feature>
<feature type="transmembrane region" description="Beta stranded" evidence="9 10">
    <location>
        <begin position="54"/>
        <end position="64"/>
    </location>
</feature>
<feature type="transmembrane region" description="Beta stranded" evidence="9 10">
    <location>
        <begin position="69"/>
        <end position="76"/>
    </location>
</feature>
<feature type="transmembrane region" description="Beta stranded" evidence="9 10">
    <location>
        <begin position="80"/>
        <end position="89"/>
    </location>
</feature>
<feature type="transmembrane region" description="Beta stranded" evidence="9 10">
    <location>
        <begin position="95"/>
        <end position="104"/>
    </location>
</feature>
<feature type="transmembrane region" description="Beta stranded" evidence="9 10">
    <location>
        <begin position="111"/>
        <end position="120"/>
    </location>
</feature>
<feature type="transmembrane region" description="Beta stranded" evidence="9 10">
    <location>
        <begin position="123"/>
        <end position="130"/>
    </location>
</feature>
<feature type="transmembrane region" description="Beta stranded" evidence="9 10">
    <location>
        <begin position="137"/>
        <end position="145"/>
    </location>
</feature>
<feature type="transmembrane region" description="Beta stranded" evidence="9 10">
    <location>
        <begin position="150"/>
        <end position="158"/>
    </location>
</feature>
<feature type="transmembrane region" description="Beta stranded" evidence="9 10">
    <location>
        <begin position="163"/>
        <end position="175"/>
    </location>
</feature>
<feature type="transmembrane region" description="Beta stranded" evidence="9 10">
    <location>
        <begin position="178"/>
        <end position="185"/>
    </location>
</feature>
<feature type="transmembrane region" description="Beta stranded" evidence="9 10">
    <location>
        <begin position="189"/>
        <end position="198"/>
    </location>
</feature>
<feature type="transmembrane region" description="Beta stranded" evidence="9 10">
    <location>
        <begin position="202"/>
        <end position="211"/>
    </location>
</feature>
<feature type="transmembrane region" description="Beta stranded" evidence="9 10">
    <location>
        <begin position="218"/>
        <end position="227"/>
    </location>
</feature>
<feature type="transmembrane region" description="Beta stranded" evidence="9 10">
    <location>
        <begin position="231"/>
        <end position="238"/>
    </location>
</feature>
<feature type="transmembrane region" description="Beta stranded" evidence="9 10">
    <location>
        <begin position="242"/>
        <end position="251"/>
    </location>
</feature>
<feature type="transmembrane region" description="Beta stranded" evidence="9 10">
    <location>
        <begin position="254"/>
        <end position="263"/>
    </location>
</feature>
<feature type="transmembrane region" description="Beta stranded" evidence="9 10">
    <location>
        <begin position="273"/>
        <end position="282"/>
    </location>
</feature>
<feature type="binding site" evidence="2">
    <location>
        <position position="12"/>
    </location>
    <ligand>
        <name>ATP</name>
        <dbReference type="ChEBI" id="CHEBI:30616"/>
    </ligand>
</feature>
<feature type="binding site" evidence="2">
    <location>
        <position position="20"/>
    </location>
    <ligand>
        <name>ATP</name>
        <dbReference type="ChEBI" id="CHEBI:30616"/>
    </ligand>
</feature>
<feature type="binding site" evidence="9">
    <location>
        <begin position="242"/>
        <end position="244"/>
    </location>
    <ligand>
        <name>NAD(+)</name>
        <dbReference type="ChEBI" id="CHEBI:57540"/>
    </ligand>
</feature>
<feature type="binding site" evidence="9">
    <location>
        <begin position="260"/>
        <end position="264"/>
    </location>
    <ligand>
        <name>NAD(+)</name>
        <dbReference type="ChEBI" id="CHEBI:57540"/>
    </ligand>
</feature>
<feature type="site" description="Involved in ceramide and phosphatidylcholine binding. Critical for channel structural stability and gating" evidence="23 33">
    <location>
        <position position="73"/>
    </location>
</feature>
<feature type="modified residue" description="N-acetylalanine" evidence="17 30 39 41 42 44">
    <location>
        <position position="2"/>
    </location>
</feature>
<feature type="modified residue" description="Phosphoserine" evidence="3">
    <location>
        <position position="13"/>
    </location>
</feature>
<feature type="modified residue" description="Phosphothreonine" evidence="2">
    <location>
        <position position="19"/>
    </location>
</feature>
<feature type="modified residue" description="N6-acetyllysine; alternate" evidence="40">
    <location>
        <position position="20"/>
    </location>
</feature>
<feature type="modified residue" description="N6-succinyllysine; alternate" evidence="2">
    <location>
        <position position="20"/>
    </location>
</feature>
<feature type="modified residue" description="Phosphotyrosine" evidence="2">
    <location>
        <position position="67"/>
    </location>
</feature>
<feature type="modified residue" description="Phosphothreonine" evidence="43">
    <location>
        <position position="107"/>
    </location>
</feature>
<feature type="modified residue" description="N6-acetyllysine; alternate" evidence="2">
    <location>
        <position position="109"/>
    </location>
</feature>
<feature type="modified residue" description="Phosphoserine; by NEK1" evidence="11">
    <location>
        <position position="193"/>
    </location>
</feature>
<feature type="modified residue" description="Phosphoserine" evidence="43">
    <location>
        <position position="240"/>
    </location>
</feature>
<feature type="modified residue" description="N6-acetyllysine" evidence="2">
    <location>
        <position position="252"/>
    </location>
</feature>
<feature type="modified residue" description="N6-acetyllysine; alternate" evidence="40">
    <location>
        <position position="266"/>
    </location>
</feature>
<feature type="cross-link" description="Glycyl lysine isopeptide (Lys-Gly) (interchain with G-Cter in ubiquitin)" evidence="25">
    <location>
        <position position="12"/>
    </location>
</feature>
<feature type="cross-link" description="Glycyl lysine isopeptide (Lys-Gly) (interchain with G-Cter in ubiquitin); alternate" evidence="25">
    <location>
        <position position="20"/>
    </location>
</feature>
<feature type="cross-link" description="Glycyl lysine isopeptide (Lys-Gly) (interchain with G-Cter in ubiquitin)" evidence="18 25">
    <location>
        <position position="53"/>
    </location>
</feature>
<feature type="cross-link" description="Glycyl lysine isopeptide (Lys-Gly) (interchain with G-Cter in ubiquitin)" evidence="18">
    <location>
        <position position="61"/>
    </location>
</feature>
<feature type="cross-link" description="Glycyl lysine isopeptide (Lys-Gly) (interchain with G-Cter in ubiquitin); alternate" evidence="18 25">
    <location>
        <position position="109"/>
    </location>
</feature>
<feature type="cross-link" description="Glycyl lysine isopeptide (Lys-Gly) (interchain with G-Cter in ubiquitin)" evidence="18 25">
    <location>
        <position position="110"/>
    </location>
</feature>
<feature type="cross-link" description="Glycyl lysine isopeptide (Lys-Gly) (interchain with G-Cter in ubiquitin)" evidence="18">
    <location>
        <position position="161"/>
    </location>
</feature>
<feature type="cross-link" description="Glycyl lysine isopeptide (Lys-Gly) (interchain with G-Cter in ubiquitin); alternate" evidence="18">
    <location>
        <position position="266"/>
    </location>
</feature>
<feature type="cross-link" description="Glycyl lysine isopeptide (Lys-Gly) (interchain with G-Cter in ubiquitin)" evidence="18 25">
    <location>
        <position position="274"/>
    </location>
</feature>
<feature type="mutagenesis site" description="PRKN-dependent polybiquitination is decreased, whereas PRKN-dependent monoubiquitination, mitochondrial calcium uptake and apoptosis are unaffected; when associated with R-20; R-53 and 109-R-R-110." evidence="25">
    <original>K</original>
    <variation>R</variation>
    <location>
        <position position="12"/>
    </location>
</feature>
<feature type="mutagenesis site" description="PRKN-dependent polybiquitination is decreased, whereas PRKN-dependent monoubiquitination, mitochondrial calcium uptake and apoptosis are unaffected; when associated with R-12; R-53 and 109-R-R-110." evidence="25">
    <original>K</original>
    <variation>R</variation>
    <location>
        <position position="20"/>
    </location>
</feature>
<feature type="mutagenesis site" description="PRKN-dependent polybiquitination is decreased, whereas PRKN-dependent monoubiquitination, mitochondrial calcium uptake and apoptosis are unaffected; when associated with R-12; R-20 and 109-R-R-110." evidence="25">
    <original>K</original>
    <variation>R</variation>
    <location>
        <position position="53"/>
    </location>
</feature>
<feature type="mutagenesis site" description="Abolishes ceramide and phosphatidylcholine binding." evidence="23">
    <original>E</original>
    <variation>Q</variation>
    <location>
        <position position="73"/>
    </location>
</feature>
<feature type="mutagenesis site" description="PRKN-dependent polybiquitination is decreased, whereas PRKN-dependent monoubiquitination, mitochondrial calcium uptake and apoptosis are unaffected; when associated with R-12; R-20 and R-53." evidence="25">
    <original>KK</original>
    <variation>RR</variation>
    <location>
        <begin position="109"/>
        <end position="110"/>
    </location>
</feature>
<feature type="mutagenesis site" description="Conformation remains open and constitutively allows cytochrome c efflux." evidence="11">
    <original>S</original>
    <variation>A</variation>
    <location>
        <position position="193"/>
    </location>
</feature>
<feature type="mutagenesis site" description="Conformation remains closed and prevents cytochrome c leakage." evidence="11">
    <original>S</original>
    <variation>E</variation>
    <location>
        <position position="193"/>
    </location>
</feature>
<feature type="mutagenesis site" description="Loss of PRKN-dependent monoubiquitination increases mitochondria calcium uptake, and ultimately increased apoptosis. Consequently, mitochondria are swelled with defective cristae structures. PRKN-dependent polyubiquitination is unaffected." evidence="25">
    <original>K</original>
    <variation>R</variation>
    <location>
        <position position="274"/>
    </location>
</feature>
<feature type="sequence conflict" description="In Ref. 4; CAB58127." evidence="31" ref="4">
    <original>Y</original>
    <variation>L</variation>
    <location>
        <position position="225"/>
    </location>
</feature>
<feature type="helix" evidence="48">
    <location>
        <begin position="7"/>
        <end position="9"/>
    </location>
</feature>
<feature type="helix" evidence="48">
    <location>
        <begin position="12"/>
        <end position="19"/>
    </location>
</feature>
<feature type="turn" evidence="46">
    <location>
        <begin position="20"/>
        <end position="22"/>
    </location>
</feature>
<feature type="strand" evidence="48">
    <location>
        <begin position="26"/>
        <end position="34"/>
    </location>
</feature>
<feature type="strand" evidence="47">
    <location>
        <begin position="36"/>
        <end position="38"/>
    </location>
</feature>
<feature type="strand" evidence="48">
    <location>
        <begin position="40"/>
        <end position="48"/>
    </location>
</feature>
<feature type="turn" evidence="48">
    <location>
        <begin position="49"/>
        <end position="51"/>
    </location>
</feature>
<feature type="strand" evidence="48">
    <location>
        <begin position="54"/>
        <end position="64"/>
    </location>
</feature>
<feature type="turn" evidence="48">
    <location>
        <begin position="65"/>
        <end position="68"/>
    </location>
</feature>
<feature type="strand" evidence="48">
    <location>
        <begin position="69"/>
        <end position="76"/>
    </location>
</feature>
<feature type="strand" evidence="46">
    <location>
        <begin position="77"/>
        <end position="79"/>
    </location>
</feature>
<feature type="strand" evidence="48">
    <location>
        <begin position="81"/>
        <end position="92"/>
    </location>
</feature>
<feature type="strand" evidence="48">
    <location>
        <begin position="95"/>
        <end position="104"/>
    </location>
</feature>
<feature type="turn" evidence="48">
    <location>
        <begin position="105"/>
        <end position="108"/>
    </location>
</feature>
<feature type="strand" evidence="48">
    <location>
        <begin position="109"/>
        <end position="120"/>
    </location>
</feature>
<feature type="strand" evidence="48">
    <location>
        <begin position="123"/>
        <end position="131"/>
    </location>
</feature>
<feature type="strand" evidence="45">
    <location>
        <begin position="132"/>
        <end position="134"/>
    </location>
</feature>
<feature type="strand" evidence="48">
    <location>
        <begin position="137"/>
        <end position="146"/>
    </location>
</feature>
<feature type="strand" evidence="48">
    <location>
        <begin position="149"/>
        <end position="158"/>
    </location>
</feature>
<feature type="turn" evidence="48">
    <location>
        <begin position="159"/>
        <end position="162"/>
    </location>
</feature>
<feature type="strand" evidence="48">
    <location>
        <begin position="163"/>
        <end position="174"/>
    </location>
</feature>
<feature type="strand" evidence="48">
    <location>
        <begin position="176"/>
        <end position="185"/>
    </location>
</feature>
<feature type="turn" evidence="48">
    <location>
        <begin position="186"/>
        <end position="188"/>
    </location>
</feature>
<feature type="strand" evidence="48">
    <location>
        <begin position="189"/>
        <end position="199"/>
    </location>
</feature>
<feature type="strand" evidence="48">
    <location>
        <begin position="202"/>
        <end position="211"/>
    </location>
</feature>
<feature type="turn" evidence="47">
    <location>
        <begin position="212"/>
        <end position="214"/>
    </location>
</feature>
<feature type="strand" evidence="48">
    <location>
        <begin position="218"/>
        <end position="228"/>
    </location>
</feature>
<feature type="strand" evidence="48">
    <location>
        <begin position="231"/>
        <end position="238"/>
    </location>
</feature>
<feature type="turn" evidence="46">
    <location>
        <begin position="239"/>
        <end position="241"/>
    </location>
</feature>
<feature type="strand" evidence="48">
    <location>
        <begin position="243"/>
        <end position="252"/>
    </location>
</feature>
<feature type="strand" evidence="48">
    <location>
        <begin position="255"/>
        <end position="263"/>
    </location>
</feature>
<feature type="turn" evidence="49">
    <location>
        <begin position="265"/>
        <end position="267"/>
    </location>
</feature>
<feature type="strand" evidence="48">
    <location>
        <begin position="268"/>
        <end position="271"/>
    </location>
</feature>
<feature type="strand" evidence="48">
    <location>
        <begin position="273"/>
        <end position="282"/>
    </location>
</feature>
<keyword id="KW-0002">3D-structure</keyword>
<keyword id="KW-0007">Acetylation</keyword>
<keyword id="KW-0053">Apoptosis</keyword>
<keyword id="KW-0067">ATP-binding</keyword>
<keyword id="KW-1003">Cell membrane</keyword>
<keyword id="KW-0903">Direct protein sequencing</keyword>
<keyword id="KW-0945">Host-virus interaction</keyword>
<keyword id="KW-0406">Ion transport</keyword>
<keyword id="KW-1017">Isopeptide bond</keyword>
<keyword id="KW-0445">Lipid transport</keyword>
<keyword id="KW-0446">Lipid-binding</keyword>
<keyword id="KW-0472">Membrane</keyword>
<keyword id="KW-0496">Mitochondrion</keyword>
<keyword id="KW-1000">Mitochondrion outer membrane</keyword>
<keyword id="KW-0520">NAD</keyword>
<keyword id="KW-0547">Nucleotide-binding</keyword>
<keyword id="KW-0597">Phosphoprotein</keyword>
<keyword id="KW-0626">Porin</keyword>
<keyword id="KW-1267">Proteomics identification</keyword>
<keyword id="KW-1185">Reference proteome</keyword>
<keyword id="KW-0812">Transmembrane</keyword>
<keyword id="KW-1134">Transmembrane beta strand</keyword>
<keyword id="KW-0813">Transport</keyword>
<keyword id="KW-0832">Ubl conjugation</keyword>
<sequence length="283" mass="30773">MAVPPTYADLGKSARDVFTKGYGFGLIKLDLKTKSENGLEFTSSGSANTETTKVTGSLETKYRWTEYGLTFTEKWNTDNTLGTEITVEDQLARGLKLTFDSSFSPNTGKKNAKIKTGYKREHINLGCDMDFDIAGPSIRGALVLGYEGWLAGYQMNFETAKSRVTQSNFAVGYKTDEFQLHTNVNDGTEFGGSIYQKVNKKLETAVNLAWTAGNSNTRFGIAAKYQIDPDACFSAKVNNSSLIGLGYTQTLKPGIKLTLSALLDGKNVNAGGHKLGLGLEFQA</sequence>
<gene>
    <name evidence="36" type="primary">VDAC1</name>
    <name type="synonym">VDAC</name>
</gene>
<evidence type="ECO:0000250" key="1">
    <source>
        <dbReference type="UniProtKB" id="A0A6P7EFR0"/>
    </source>
</evidence>
<evidence type="ECO:0000250" key="2">
    <source>
        <dbReference type="UniProtKB" id="Q60932"/>
    </source>
</evidence>
<evidence type="ECO:0000250" key="3">
    <source>
        <dbReference type="UniProtKB" id="Q9Z2L0"/>
    </source>
</evidence>
<evidence type="ECO:0000269" key="4">
    <source>
    </source>
</evidence>
<evidence type="ECO:0000269" key="5">
    <source>
    </source>
</evidence>
<evidence type="ECO:0000269" key="6">
    <source>
    </source>
</evidence>
<evidence type="ECO:0000269" key="7">
    <source>
    </source>
</evidence>
<evidence type="ECO:0000269" key="8">
    <source>
    </source>
</evidence>
<evidence type="ECO:0000269" key="9">
    <source>
    </source>
</evidence>
<evidence type="ECO:0000269" key="10">
    <source>
    </source>
</evidence>
<evidence type="ECO:0000269" key="11">
    <source>
    </source>
</evidence>
<evidence type="ECO:0000269" key="12">
    <source>
    </source>
</evidence>
<evidence type="ECO:0000269" key="13">
    <source>
    </source>
</evidence>
<evidence type="ECO:0000269" key="14">
    <source>
    </source>
</evidence>
<evidence type="ECO:0000269" key="15">
    <source>
    </source>
</evidence>
<evidence type="ECO:0000269" key="16">
    <source>
    </source>
</evidence>
<evidence type="ECO:0000269" key="17">
    <source>
    </source>
</evidence>
<evidence type="ECO:0000269" key="18">
    <source>
    </source>
</evidence>
<evidence type="ECO:0000269" key="19">
    <source>
    </source>
</evidence>
<evidence type="ECO:0000269" key="20">
    <source>
    </source>
</evidence>
<evidence type="ECO:0000269" key="21">
    <source>
    </source>
</evidence>
<evidence type="ECO:0000269" key="22">
    <source>
    </source>
</evidence>
<evidence type="ECO:0000269" key="23">
    <source>
    </source>
</evidence>
<evidence type="ECO:0000269" key="24">
    <source>
    </source>
</evidence>
<evidence type="ECO:0000269" key="25">
    <source>
    </source>
</evidence>
<evidence type="ECO:0000269" key="26">
    <source>
    </source>
</evidence>
<evidence type="ECO:0000269" key="27">
    <source>
    </source>
</evidence>
<evidence type="ECO:0000269" key="28">
    <source>
    </source>
</evidence>
<evidence type="ECO:0000269" key="29">
    <source ref="11"/>
</evidence>
<evidence type="ECO:0000269" key="30">
    <source ref="12"/>
</evidence>
<evidence type="ECO:0000305" key="31"/>
<evidence type="ECO:0000305" key="32">
    <source>
    </source>
</evidence>
<evidence type="ECO:0000305" key="33">
    <source>
    </source>
</evidence>
<evidence type="ECO:0000305" key="34">
    <source>
    </source>
</evidence>
<evidence type="ECO:0000305" key="35">
    <source>
    </source>
</evidence>
<evidence type="ECO:0000312" key="36">
    <source>
        <dbReference type="HGNC" id="HGNC:12669"/>
    </source>
</evidence>
<evidence type="ECO:0007744" key="37">
    <source>
        <dbReference type="PDB" id="2JK4"/>
    </source>
</evidence>
<evidence type="ECO:0007744" key="38">
    <source>
        <dbReference type="PDB" id="2K4T"/>
    </source>
</evidence>
<evidence type="ECO:0007744" key="39">
    <source>
    </source>
</evidence>
<evidence type="ECO:0007744" key="40">
    <source>
    </source>
</evidence>
<evidence type="ECO:0007744" key="41">
    <source>
    </source>
</evidence>
<evidence type="ECO:0007744" key="42">
    <source>
    </source>
</evidence>
<evidence type="ECO:0007744" key="43">
    <source>
    </source>
</evidence>
<evidence type="ECO:0007744" key="44">
    <source>
    </source>
</evidence>
<evidence type="ECO:0007829" key="45">
    <source>
        <dbReference type="PDB" id="5JDP"/>
    </source>
</evidence>
<evidence type="ECO:0007829" key="46">
    <source>
        <dbReference type="PDB" id="5XDN"/>
    </source>
</evidence>
<evidence type="ECO:0007829" key="47">
    <source>
        <dbReference type="PDB" id="5XDO"/>
    </source>
</evidence>
<evidence type="ECO:0007829" key="48">
    <source>
        <dbReference type="PDB" id="6G6U"/>
    </source>
</evidence>
<evidence type="ECO:0007829" key="49">
    <source>
        <dbReference type="PDB" id="6TIR"/>
    </source>
</evidence>
<comment type="function">
    <text evidence="2 4 5 6 9 11 16 21 23 25 28">Non-selective voltage-gated ion channel that mediates the transport of anions and cations through the mitochondrion outer membrane and plasma membrane (PubMed:10661876, PubMed:11845315, PubMed:18755977, PubMed:30061676, PubMed:8420959). The channel at the outer mitochondrial membrane allows diffusion of small hydrophilic molecules; in the plasma membrane it is involved in cell volume regulation and apoptosis (PubMed:10661876, PubMed:11845315, PubMed:18755977, PubMed:8420959). It adopts an open conformation at low or zero membrane potential and a closed conformation at potentials above 30-40 mV (PubMed:10661876, PubMed:18755977, PubMed:8420959). The open state has a weak anion selectivity whereas the closed state is cation-selective (PubMed:18755977, PubMed:8420959). Binds various signaling molecules, including the sphingolipid ceramide, the phospholipid phosphatidylcholine, and the sterols cholesterol and oxysterol (PubMed:18755977, PubMed:31015432). In depolarized mitochondria, acts downstream of PRKN and PINK1 to promote mitophagy or prevent apoptosis; polyubiquitination by PRKN promotes mitophagy, while monoubiquitination by PRKN decreases mitochondrial calcium influx which ultimately inhibits apoptosis (PubMed:32047033). May participate in the formation of the permeability transition pore complex (PTPC) responsible for the release of mitochondrial products that triggers apoptosis (PubMed:15033708, PubMed:25296756). May mediate ATP export from cells (PubMed:30061676). Part of a complex composed of HSPA9, ITPR1 and VDAC1 that regulates mitochondrial calcium-dependent apoptosis by facilitating calcium transport from the ER lumen to the mitochondria intermembrane space thus providing calcium for the downstream calcium channel MCU that directly releases it into mitochondria matrix (By similarity). Mediates cytochrome c efflux (PubMed:20230784).</text>
</comment>
<comment type="function">
    <text evidence="26">Catalyzes the scrambling of phospholipids across the outer mitochondrial membrane; the mechanism is unrelated to channel activity and is capable of translocating both anionic and zwitterionic phospholipids.</text>
</comment>
<comment type="catalytic activity">
    <reaction evidence="9 28 32">
        <text>chloride(in) = chloride(out)</text>
        <dbReference type="Rhea" id="RHEA:29823"/>
        <dbReference type="ChEBI" id="CHEBI:17996"/>
    </reaction>
</comment>
<comment type="catalytic activity">
    <reaction evidence="9 28 32">
        <text>K(+)(in) = K(+)(out)</text>
        <dbReference type="Rhea" id="RHEA:29463"/>
        <dbReference type="ChEBI" id="CHEBI:29103"/>
    </reaction>
</comment>
<comment type="catalytic activity">
    <reaction evidence="34">
        <text>ATP(in) = ATP(out)</text>
        <dbReference type="Rhea" id="RHEA:75687"/>
        <dbReference type="ChEBI" id="CHEBI:30616"/>
    </reaction>
</comment>
<comment type="catalytic activity">
    <reaction evidence="3">
        <text>Ca(2+)(in) = Ca(2+)(out)</text>
        <dbReference type="Rhea" id="RHEA:29671"/>
        <dbReference type="ChEBI" id="CHEBI:29108"/>
    </reaction>
</comment>
<comment type="catalytic activity">
    <reaction evidence="3">
        <text>Na(+)(in) = Na(+)(out)</text>
        <dbReference type="Rhea" id="RHEA:34963"/>
        <dbReference type="ChEBI" id="CHEBI:29101"/>
    </reaction>
</comment>
<comment type="catalytic activity">
    <reaction evidence="3">
        <text>Mg(2+)(in) = Mg(2+)(out)</text>
        <dbReference type="Rhea" id="RHEA:29827"/>
        <dbReference type="ChEBI" id="CHEBI:18420"/>
    </reaction>
</comment>
<comment type="catalytic activity">
    <reaction evidence="1">
        <text>L-glutamate(out) = L-glutamate(in)</text>
        <dbReference type="Rhea" id="RHEA:66336"/>
        <dbReference type="ChEBI" id="CHEBI:29985"/>
    </reaction>
</comment>
<comment type="catalytic activity">
    <reaction evidence="1">
        <text>dopamine(out) = dopamine(in)</text>
        <dbReference type="Rhea" id="RHEA:73863"/>
        <dbReference type="ChEBI" id="CHEBI:59905"/>
    </reaction>
</comment>
<comment type="catalytic activity">
    <reaction evidence="1">
        <text>acetylcholine(in) = acetylcholine(out)</text>
        <dbReference type="Rhea" id="RHEA:74663"/>
        <dbReference type="ChEBI" id="CHEBI:15355"/>
    </reaction>
</comment>
<comment type="catalytic activity">
    <reaction evidence="11">
        <text>Fe(III)-[cytochrome c](out) = Fe(III)-[cytochrome c](in)</text>
        <dbReference type="Rhea" id="RHEA:79311"/>
        <dbReference type="Rhea" id="RHEA-COMP:14399"/>
        <dbReference type="ChEBI" id="CHEBI:29034"/>
    </reaction>
</comment>
<comment type="catalytic activity">
    <reaction evidence="26">
        <text>a 1,2-diacyl-sn-glycero-3-phosphocholine(in) = a 1,2-diacyl-sn-glycero-3-phosphocholine(out)</text>
        <dbReference type="Rhea" id="RHEA:38571"/>
        <dbReference type="ChEBI" id="CHEBI:57643"/>
    </reaction>
</comment>
<comment type="catalytic activity">
    <reaction evidence="35">
        <text>a 1,2-diacyl-sn-glycero-3-phospho-L-serine(in) = a 1,2-diacyl-sn-glycero-3-phospho-L-serine(out)</text>
        <dbReference type="Rhea" id="RHEA:38663"/>
        <dbReference type="ChEBI" id="CHEBI:57262"/>
    </reaction>
</comment>
<comment type="activity regulation">
    <text evidence="12">Inhibited by nitric oxide.</text>
</comment>
<comment type="subunit">
    <text evidence="3 9 13 14 15 16 19 21 22 24 26 28">Homodimer and homotrimer; in response to cyclic AMP or calcium; oligomerization is required for scramblase activity (PubMed:30061676, PubMed:38065946). Component of the mitochondrial permeability transition pore complex (mPTPC), at least composed of SPG7, VDAC1 and PPIF (PubMed:26387735). Interacts with SPG7, NIPSNAP2 and SLC25A30 (PubMed:26387735). Interacts with hexokinases including HK1 (PubMed:22304920, PubMed:8420959). The HK1-VDAC1 complex interacts with ATF2 (PubMed:22304920). Interacts with BCL2L1 (PubMed:18755977, PubMed:25296756). Interacts with BAK1 (PubMed:25296756). Interacts with RTL10/BOP (via BH3 domain) (PubMed:23055042). Interacts with amyloid-beta and APP; induces VDAC1 dephosphorylation (PubMed:25168729). Interacts with TMEM41B (PubMed:30352685). Interacts with BCAP31 (PubMed:31206022). Interacts with HSPA9; this interaction couples ITPR1 to VDAC1 (By similarity).</text>
</comment>
<comment type="subunit">
    <text evidence="7">(Microbial infection) Interacts with influenza A virus PB1-F2 protein.</text>
</comment>
<comment type="interaction">
    <interactant intactId="EBI-354158">
        <id>P21796</id>
    </interactant>
    <interactant intactId="EBI-1222467">
        <id>P02649</id>
        <label>APOE</label>
    </interactant>
    <organismsDiffer>false</organismsDiffer>
    <experiments>2</experiments>
</comment>
<comment type="interaction">
    <interactant intactId="EBI-354158">
        <id>P21796</id>
    </interactant>
    <interactant intactId="EBI-444308">
        <id>P06493</id>
        <label>CDK1</label>
    </interactant>
    <organismsDiffer>false</organismsDiffer>
    <experiments>3</experiments>
</comment>
<comment type="interaction">
    <interactant intactId="EBI-354158">
        <id>P21796</id>
    </interactant>
    <interactant intactId="EBI-713162">
        <id>P19367</id>
        <label>HK1</label>
    </interactant>
    <organismsDiffer>false</organismsDiffer>
    <experiments>3</experiments>
</comment>
<comment type="interaction">
    <interactant intactId="EBI-354158">
        <id>P21796</id>
    </interactant>
    <interactant intactId="EBI-5323863">
        <id>Q5S007</id>
        <label>LRRK2</label>
    </interactant>
    <organismsDiffer>false</organismsDiffer>
    <experiments>3</experiments>
</comment>
<comment type="interaction">
    <interactant intactId="EBI-354158">
        <id>P21796</id>
    </interactant>
    <interactant intactId="EBI-2255129">
        <id>P30041</id>
        <label>PRDX6</label>
    </interactant>
    <organismsDiffer>false</organismsDiffer>
    <experiments>3</experiments>
</comment>
<comment type="interaction">
    <interactant intactId="EBI-354158">
        <id>P21796</id>
    </interactant>
    <interactant intactId="EBI-10697720">
        <id>Q7L3V2</id>
        <label>RTL10</label>
    </interactant>
    <organismsDiffer>false</organismsDiffer>
    <experiments>2</experiments>
</comment>
<comment type="interaction">
    <interactant intactId="EBI-354158">
        <id>P21796</id>
    </interactant>
    <interactant intactId="EBI-356254">
        <id>P12236</id>
        <label>SLC25A6</label>
    </interactant>
    <organismsDiffer>false</organismsDiffer>
    <experiments>4</experiments>
</comment>
<comment type="interaction">
    <interactant intactId="EBI-354158">
        <id>P21796</id>
    </interactant>
    <interactant intactId="EBI-354158">
        <id>P21796</id>
        <label>VDAC1</label>
    </interactant>
    <organismsDiffer>false</organismsDiffer>
    <experiments>4</experiments>
</comment>
<comment type="interaction">
    <interactant intactId="EBI-354158">
        <id>P21796</id>
    </interactant>
    <interactant intactId="EBI-354022">
        <id>P45880</id>
        <label>VDAC2</label>
    </interactant>
    <organismsDiffer>false</organismsDiffer>
    <experiments>6</experiments>
</comment>
<comment type="interaction">
    <interactant intactId="EBI-354158">
        <id>P21796</id>
    </interactant>
    <interactant intactId="EBI-354196">
        <id>Q9Y277</id>
        <label>VDAC3</label>
    </interactant>
    <organismsDiffer>false</organismsDiffer>
    <experiments>4</experiments>
</comment>
<comment type="interaction">
    <interactant intactId="EBI-354158">
        <id>P21796</id>
    </interactant>
    <interactant intactId="EBI-356498">
        <id>P62258</id>
        <label>YWHAE</label>
    </interactant>
    <organismsDiffer>false</organismsDiffer>
    <experiments>5</experiments>
</comment>
<comment type="interaction">
    <interactant intactId="EBI-354158">
        <id>P21796</id>
    </interactant>
    <interactant intactId="EBI-12579807">
        <id>P0C0U1</id>
        <label>PB1</label>
    </interactant>
    <organismsDiffer>true</organismsDiffer>
    <experiments>4</experiments>
</comment>
<comment type="subcellular location">
    <subcellularLocation>
        <location evidence="4 23 24 27">Mitochondrion outer membrane</location>
        <topology evidence="9 10 20">Multi-pass membrane protein</topology>
    </subcellularLocation>
    <subcellularLocation>
        <location evidence="15 16">Cell membrane</location>
        <topology evidence="9 10">Multi-pass membrane protein</topology>
    </subcellularLocation>
    <subcellularLocation>
        <location evidence="15">Membrane raft</location>
        <topology evidence="9 10">Multi-pass membrane protein</topology>
    </subcellularLocation>
    <text evidence="3">Found in a complex with HSPA9 and VDAC1 at the endoplasmic reticulum-mitochondria contact sites.</text>
</comment>
<comment type="tissue specificity">
    <text evidence="20 28">Expressed in erythrocytes (at protein level) (PubMed:27641616). Expressed in heart, liver and skeletal muscle (PubMed:8420959).</text>
</comment>
<comment type="domain">
    <text evidence="9 10">Consists mainly of a membrane-spanning beta-barrel formed by 19 beta-strands (PubMed:18755977, PubMed:18832158). The helical N-terminus folds back into the pore opening and plays a role in voltage-gated channel activity (PubMed:18755977, PubMed:18832158).</text>
</comment>
<comment type="PTM">
    <text evidence="11">Phosphorylation at Ser-193 by NEK1 promotes the closed conformational state preventing excessive mitochondrial membrane permeability and subsequent apoptotic cell death after injury (PubMed:20230784). Phosphorylation by the AKT-GSK3B axis stabilizes the protein probably by preventing ubiquitin-mediated proteasomal degradation.</text>
</comment>
<comment type="PTM">
    <text evidence="18 25">Ubiquitinated (PubMed:25621951, PubMed:32047033). Undergoes monoubiquitination and polyubiquitination by PRKN; monoubiquitination at Lys-274 inhibits apoptosis, whereas polyubiquitination leads to its degradation and promotes mitophagy (PubMed:25621951, PubMed:32047033). Deubiquitinated by USP30 (PubMed:25621951).</text>
</comment>
<comment type="similarity">
    <text evidence="31">Belongs to the eukaryotic mitochondrial porin family.</text>
</comment>
<comment type="online information" name="Atlas of Genetics and Cytogenetics in Oncology and Haematology">
    <link uri="https://atlasgeneticsoncology.org/gene/50902/VDAC1"/>
</comment>
<name>VDAC1_HUMAN</name>
<organism>
    <name type="scientific">Homo sapiens</name>
    <name type="common">Human</name>
    <dbReference type="NCBI Taxonomy" id="9606"/>
    <lineage>
        <taxon>Eukaryota</taxon>
        <taxon>Metazoa</taxon>
        <taxon>Chordata</taxon>
        <taxon>Craniata</taxon>
        <taxon>Vertebrata</taxon>
        <taxon>Euteleostomi</taxon>
        <taxon>Mammalia</taxon>
        <taxon>Eutheria</taxon>
        <taxon>Euarchontoglires</taxon>
        <taxon>Primates</taxon>
        <taxon>Haplorrhini</taxon>
        <taxon>Catarrhini</taxon>
        <taxon>Hominidae</taxon>
        <taxon>Homo</taxon>
    </lineage>
</organism>
<accession>P21796</accession>
<accession>B3KVK4</accession>
<accession>D3DQ93</accession>
<accession>Q5FVE7</accession>
<accession>Q9UIQ5</accession>
<accession>Q9UPL0</accession>
<protein>
    <recommendedName>
        <fullName evidence="31">Non-selective voltage-gated ion channel VDAC1</fullName>
    </recommendedName>
    <alternativeName>
        <fullName>Outer mitochondrial membrane protein porin 1</fullName>
    </alternativeName>
    <alternativeName>
        <fullName>Plasmalemmal porin</fullName>
    </alternativeName>
    <alternativeName>
        <fullName>Porin 31HL</fullName>
    </alternativeName>
    <alternativeName>
        <fullName>Porin 31HM</fullName>
    </alternativeName>
    <alternativeName>
        <fullName>Voltage-dependent anion-selective channel protein 1</fullName>
        <shortName>VDAC-1</shortName>
        <shortName>hVDAC1</shortName>
    </alternativeName>
</protein>
<dbReference type="EMBL" id="L06132">
    <property type="protein sequence ID" value="AAA61272.1"/>
    <property type="molecule type" value="mRNA"/>
</dbReference>
<dbReference type="EMBL" id="AJ250032">
    <property type="protein sequence ID" value="CAB58127.1"/>
    <property type="molecule type" value="Genomic_DNA"/>
</dbReference>
<dbReference type="EMBL" id="AJ250033">
    <property type="protein sequence ID" value="CAB58127.1"/>
    <property type="status" value="JOINED"/>
    <property type="molecule type" value="Genomic_DNA"/>
</dbReference>
<dbReference type="EMBL" id="AJ250034">
    <property type="protein sequence ID" value="CAB58127.1"/>
    <property type="status" value="JOINED"/>
    <property type="molecule type" value="Genomic_DNA"/>
</dbReference>
<dbReference type="EMBL" id="AJ250035">
    <property type="protein sequence ID" value="CAB58127.1"/>
    <property type="status" value="JOINED"/>
    <property type="molecule type" value="Genomic_DNA"/>
</dbReference>
<dbReference type="EMBL" id="AJ250036">
    <property type="protein sequence ID" value="CAB58127.1"/>
    <property type="status" value="JOINED"/>
    <property type="molecule type" value="Genomic_DNA"/>
</dbReference>
<dbReference type="EMBL" id="AJ250037">
    <property type="protein sequence ID" value="CAB58127.1"/>
    <property type="status" value="JOINED"/>
    <property type="molecule type" value="Genomic_DNA"/>
</dbReference>
<dbReference type="EMBL" id="AJ250038">
    <property type="protein sequence ID" value="CAB58127.1"/>
    <property type="status" value="JOINED"/>
    <property type="molecule type" value="Genomic_DNA"/>
</dbReference>
<dbReference type="EMBL" id="AJ250039">
    <property type="protein sequence ID" value="CAB58127.1"/>
    <property type="status" value="JOINED"/>
    <property type="molecule type" value="Genomic_DNA"/>
</dbReference>
<dbReference type="EMBL" id="AF151097">
    <property type="protein sequence ID" value="AAD54939.1"/>
    <property type="molecule type" value="Genomic_DNA"/>
</dbReference>
<dbReference type="EMBL" id="AF151093">
    <property type="protein sequence ID" value="AAD54939.1"/>
    <property type="status" value="JOINED"/>
    <property type="molecule type" value="Genomic_DNA"/>
</dbReference>
<dbReference type="EMBL" id="AF151094">
    <property type="protein sequence ID" value="AAD54939.1"/>
    <property type="status" value="JOINED"/>
    <property type="molecule type" value="Genomic_DNA"/>
</dbReference>
<dbReference type="EMBL" id="AF151095">
    <property type="protein sequence ID" value="AAD54939.1"/>
    <property type="status" value="JOINED"/>
    <property type="molecule type" value="Genomic_DNA"/>
</dbReference>
<dbReference type="EMBL" id="AF151096">
    <property type="protein sequence ID" value="AAD54939.1"/>
    <property type="status" value="JOINED"/>
    <property type="molecule type" value="Genomic_DNA"/>
</dbReference>
<dbReference type="EMBL" id="AC005200">
    <property type="protein sequence ID" value="AAC24723.1"/>
    <property type="molecule type" value="Genomic_DNA"/>
</dbReference>
<dbReference type="EMBL" id="AK122953">
    <property type="protein sequence ID" value="BAG53816.1"/>
    <property type="molecule type" value="mRNA"/>
</dbReference>
<dbReference type="EMBL" id="AC008608">
    <property type="status" value="NOT_ANNOTATED_CDS"/>
    <property type="molecule type" value="Genomic_DNA"/>
</dbReference>
<dbReference type="EMBL" id="CH471062">
    <property type="protein sequence ID" value="EAW62281.1"/>
    <property type="molecule type" value="Genomic_DNA"/>
</dbReference>
<dbReference type="EMBL" id="CH471062">
    <property type="protein sequence ID" value="EAW62282.1"/>
    <property type="molecule type" value="Genomic_DNA"/>
</dbReference>
<dbReference type="EMBL" id="CH471062">
    <property type="protein sequence ID" value="EAW62283.1"/>
    <property type="molecule type" value="Genomic_DNA"/>
</dbReference>
<dbReference type="EMBL" id="CH471062">
    <property type="protein sequence ID" value="EAW62285.1"/>
    <property type="molecule type" value="Genomic_DNA"/>
</dbReference>
<dbReference type="EMBL" id="CH471062">
    <property type="protein sequence ID" value="EAW62286.1"/>
    <property type="molecule type" value="Genomic_DNA"/>
</dbReference>
<dbReference type="EMBL" id="BC008482">
    <property type="protein sequence ID" value="AAH08482.1"/>
    <property type="molecule type" value="mRNA"/>
</dbReference>
<dbReference type="EMBL" id="BC071168">
    <property type="protein sequence ID" value="AAH71168.1"/>
    <property type="molecule type" value="mRNA"/>
</dbReference>
<dbReference type="EMBL" id="BC090042">
    <property type="protein sequence ID" value="AAH90042.1"/>
    <property type="molecule type" value="mRNA"/>
</dbReference>
<dbReference type="CCDS" id="CCDS4168.1"/>
<dbReference type="PIR" id="A44422">
    <property type="entry name" value="MMHUP3"/>
</dbReference>
<dbReference type="RefSeq" id="NP_001387937.1">
    <property type="nucleotide sequence ID" value="NM_001401008.1"/>
</dbReference>
<dbReference type="RefSeq" id="NP_001387938.1">
    <property type="nucleotide sequence ID" value="NM_001401009.1"/>
</dbReference>
<dbReference type="RefSeq" id="NP_001387939.1">
    <property type="nucleotide sequence ID" value="NM_001401010.1"/>
</dbReference>
<dbReference type="RefSeq" id="NP_001387940.1">
    <property type="nucleotide sequence ID" value="NM_001401011.1"/>
</dbReference>
<dbReference type="RefSeq" id="NP_001387945.1">
    <property type="nucleotide sequence ID" value="NM_001401016.1"/>
</dbReference>
<dbReference type="RefSeq" id="NP_001387946.1">
    <property type="nucleotide sequence ID" value="NM_001401017.1"/>
</dbReference>
<dbReference type="RefSeq" id="NP_001387947.1">
    <property type="nucleotide sequence ID" value="NM_001401018.1"/>
</dbReference>
<dbReference type="RefSeq" id="NP_001387949.1">
    <property type="nucleotide sequence ID" value="NM_001401020.1"/>
</dbReference>
<dbReference type="RefSeq" id="NP_001387950.1">
    <property type="nucleotide sequence ID" value="NM_001401021.1"/>
</dbReference>
<dbReference type="RefSeq" id="NP_001387951.1">
    <property type="nucleotide sequence ID" value="NM_001401022.1"/>
</dbReference>
<dbReference type="RefSeq" id="NP_001387952.1">
    <property type="nucleotide sequence ID" value="NM_001401023.1"/>
</dbReference>
<dbReference type="RefSeq" id="NP_003365.1">
    <property type="nucleotide sequence ID" value="NM_003374.3"/>
</dbReference>
<dbReference type="RefSeq" id="XP_005272132.1">
    <property type="nucleotide sequence ID" value="XM_005272075.3"/>
</dbReference>
<dbReference type="RefSeq" id="XP_016865310.1">
    <property type="nucleotide sequence ID" value="XM_017009821.1"/>
</dbReference>
<dbReference type="RefSeq" id="XP_016865311.1">
    <property type="nucleotide sequence ID" value="XM_017009822.1"/>
</dbReference>
<dbReference type="RefSeq" id="XP_016865312.1">
    <property type="nucleotide sequence ID" value="XM_017009823.1"/>
</dbReference>
<dbReference type="PDB" id="2JK4">
    <property type="method" value="X-ray"/>
    <property type="resolution" value="4.10 A"/>
    <property type="chains" value="A=2-283"/>
</dbReference>
<dbReference type="PDB" id="2K4T">
    <property type="method" value="NMR"/>
    <property type="chains" value="A=1-283"/>
</dbReference>
<dbReference type="PDB" id="5JDP">
    <property type="method" value="NMR"/>
    <property type="chains" value="A=2-283"/>
</dbReference>
<dbReference type="PDB" id="5XDN">
    <property type="method" value="X-ray"/>
    <property type="resolution" value="3.15 A"/>
    <property type="chains" value="A/B=1-283"/>
</dbReference>
<dbReference type="PDB" id="5XDO">
    <property type="method" value="X-ray"/>
    <property type="resolution" value="3.10 A"/>
    <property type="chains" value="A/B=1-283"/>
</dbReference>
<dbReference type="PDB" id="6G6U">
    <property type="method" value="X-ray"/>
    <property type="resolution" value="2.74 A"/>
    <property type="chains" value="A/B=1-283"/>
</dbReference>
<dbReference type="PDB" id="6G73">
    <property type="method" value="X-ray"/>
    <property type="resolution" value="3.27 A"/>
    <property type="chains" value="A/B/C/D=1-283"/>
</dbReference>
<dbReference type="PDB" id="6TIQ">
    <property type="method" value="NMR"/>
    <property type="chains" value="A=1-283"/>
</dbReference>
<dbReference type="PDB" id="6TIR">
    <property type="method" value="NMR"/>
    <property type="chains" value="A=1-283"/>
</dbReference>
<dbReference type="PDB" id="7QI2">
    <property type="method" value="NMR"/>
    <property type="chains" value="A=1-283"/>
</dbReference>
<dbReference type="PDB" id="8J0O">
    <property type="method" value="EM"/>
    <property type="resolution" value="3.32 A"/>
    <property type="chains" value="K=1-283"/>
</dbReference>
<dbReference type="PDBsum" id="2JK4"/>
<dbReference type="PDBsum" id="2K4T"/>
<dbReference type="PDBsum" id="5JDP"/>
<dbReference type="PDBsum" id="5XDN"/>
<dbReference type="PDBsum" id="5XDO"/>
<dbReference type="PDBsum" id="6G6U"/>
<dbReference type="PDBsum" id="6G73"/>
<dbReference type="PDBsum" id="6TIQ"/>
<dbReference type="PDBsum" id="6TIR"/>
<dbReference type="PDBsum" id="7QI2"/>
<dbReference type="PDBsum" id="8J0O"/>
<dbReference type="BMRB" id="P21796"/>
<dbReference type="EMDB" id="EMD-35907"/>
<dbReference type="SMR" id="P21796"/>
<dbReference type="BioGRID" id="113259">
    <property type="interactions" value="555"/>
</dbReference>
<dbReference type="CORUM" id="P21796"/>
<dbReference type="DIP" id="DIP-32862N"/>
<dbReference type="FunCoup" id="P21796">
    <property type="interactions" value="2553"/>
</dbReference>
<dbReference type="IntAct" id="P21796">
    <property type="interactions" value="294"/>
</dbReference>
<dbReference type="MINT" id="P21796"/>
<dbReference type="STRING" id="9606.ENSP00000378487"/>
<dbReference type="ChEMBL" id="CHEMBL4295729"/>
<dbReference type="DrugBank" id="DB01375">
    <property type="generic name" value="Aluminium monostearate"/>
</dbReference>
<dbReference type="DrugBank" id="DB09061">
    <property type="generic name" value="Cannabidiol"/>
</dbReference>
<dbReference type="DrugBank" id="DB14009">
    <property type="generic name" value="Medical Cannabis"/>
</dbReference>
<dbReference type="DrugBank" id="DB14011">
    <property type="generic name" value="Nabiximols"/>
</dbReference>
<dbReference type="CarbonylDB" id="P21796"/>
<dbReference type="GlyCosmos" id="P21796">
    <property type="glycosylation" value="1 site, 1 glycan"/>
</dbReference>
<dbReference type="GlyGen" id="P21796">
    <property type="glycosylation" value="3 sites, 2 N-linked glycans (2 sites), 1 O-linked glycan (1 site)"/>
</dbReference>
<dbReference type="iPTMnet" id="P21796"/>
<dbReference type="PhosphoSitePlus" id="P21796"/>
<dbReference type="SwissPalm" id="P21796"/>
<dbReference type="BioMuta" id="VDAC1"/>
<dbReference type="DMDM" id="130683"/>
<dbReference type="OGP" id="P21796"/>
<dbReference type="REPRODUCTION-2DPAGE" id="IPI00216308"/>
<dbReference type="REPRODUCTION-2DPAGE" id="P21796"/>
<dbReference type="jPOST" id="P21796"/>
<dbReference type="MassIVE" id="P21796"/>
<dbReference type="PaxDb" id="9606-ENSP00000265333"/>
<dbReference type="PeptideAtlas" id="P21796"/>
<dbReference type="PRIDE" id="P21796"/>
<dbReference type="ProteomicsDB" id="53904"/>
<dbReference type="Pumba" id="P21796"/>
<dbReference type="TopDownProteomics" id="P21796"/>
<dbReference type="ABCD" id="P21796">
    <property type="antibodies" value="1 sequenced antibody"/>
</dbReference>
<dbReference type="Antibodypedia" id="3137">
    <property type="antibodies" value="729 antibodies from 48 providers"/>
</dbReference>
<dbReference type="DNASU" id="7416"/>
<dbReference type="Ensembl" id="ENST00000265333.8">
    <property type="protein sequence ID" value="ENSP00000265333.3"/>
    <property type="gene ID" value="ENSG00000213585.11"/>
</dbReference>
<dbReference type="Ensembl" id="ENST00000395044.7">
    <property type="protein sequence ID" value="ENSP00000378484.3"/>
    <property type="gene ID" value="ENSG00000213585.11"/>
</dbReference>
<dbReference type="Ensembl" id="ENST00000395047.6">
    <property type="protein sequence ID" value="ENSP00000378487.2"/>
    <property type="gene ID" value="ENSG00000213585.11"/>
</dbReference>
<dbReference type="GeneID" id="7416"/>
<dbReference type="KEGG" id="hsa:7416"/>
<dbReference type="MANE-Select" id="ENST00000265333.8">
    <property type="protein sequence ID" value="ENSP00000265333.3"/>
    <property type="RefSeq nucleotide sequence ID" value="NM_003374.3"/>
    <property type="RefSeq protein sequence ID" value="NP_003365.1"/>
</dbReference>
<dbReference type="UCSC" id="uc003kyp.3">
    <property type="organism name" value="human"/>
</dbReference>
<dbReference type="AGR" id="HGNC:12669"/>
<dbReference type="CTD" id="7416"/>
<dbReference type="DisGeNET" id="7416"/>
<dbReference type="GeneCards" id="VDAC1"/>
<dbReference type="HGNC" id="HGNC:12669">
    <property type="gene designation" value="VDAC1"/>
</dbReference>
<dbReference type="HPA" id="ENSG00000213585">
    <property type="expression patterns" value="Tissue enhanced (skeletal muscle, tongue)"/>
</dbReference>
<dbReference type="MIM" id="604492">
    <property type="type" value="gene+phenotype"/>
</dbReference>
<dbReference type="neXtProt" id="NX_P21796"/>
<dbReference type="OpenTargets" id="ENSG00000213585"/>
<dbReference type="PharmGKB" id="PA37292"/>
<dbReference type="VEuPathDB" id="HostDB:ENSG00000213585"/>
<dbReference type="eggNOG" id="KOG3126">
    <property type="taxonomic scope" value="Eukaryota"/>
</dbReference>
<dbReference type="GeneTree" id="ENSGT00950000182869"/>
<dbReference type="HOGENOM" id="CLU_044399_2_0_1"/>
<dbReference type="InParanoid" id="P21796"/>
<dbReference type="OMA" id="KPCCSHE"/>
<dbReference type="OrthoDB" id="7827681at2759"/>
<dbReference type="PAN-GO" id="P21796">
    <property type="GO annotations" value="2 GO annotations based on evolutionary models"/>
</dbReference>
<dbReference type="PhylomeDB" id="P21796"/>
<dbReference type="TreeFam" id="TF315091"/>
<dbReference type="PathwayCommons" id="P21796"/>
<dbReference type="Reactome" id="R-HSA-1268020">
    <property type="pathway name" value="Mitochondrial protein import"/>
</dbReference>
<dbReference type="Reactome" id="R-HSA-5205685">
    <property type="pathway name" value="PINK1-PRKN Mediated Mitophagy"/>
</dbReference>
<dbReference type="Reactome" id="R-HSA-5689880">
    <property type="pathway name" value="Ub-specific processing proteases"/>
</dbReference>
<dbReference type="Reactome" id="R-HSA-70268">
    <property type="pathway name" value="Pyruvate metabolism"/>
</dbReference>
<dbReference type="Reactome" id="R-HSA-8949215">
    <property type="pathway name" value="Mitochondrial calcium ion transport"/>
</dbReference>
<dbReference type="SignaLink" id="P21796"/>
<dbReference type="SIGNOR" id="P21796"/>
<dbReference type="BioGRID-ORCS" id="7416">
    <property type="hits" value="256 hits in 1156 CRISPR screens"/>
</dbReference>
<dbReference type="CD-CODE" id="91857CE7">
    <property type="entry name" value="Nucleolus"/>
</dbReference>
<dbReference type="CD-CODE" id="FB4E32DD">
    <property type="entry name" value="Presynaptic clusters and postsynaptic densities"/>
</dbReference>
<dbReference type="ChiTaRS" id="VDAC1">
    <property type="organism name" value="human"/>
</dbReference>
<dbReference type="EvolutionaryTrace" id="P21796"/>
<dbReference type="GeneWiki" id="VDAC1"/>
<dbReference type="GenomeRNAi" id="7416"/>
<dbReference type="Pharos" id="P21796">
    <property type="development level" value="Tbio"/>
</dbReference>
<dbReference type="PRO" id="PR:P21796"/>
<dbReference type="Proteomes" id="UP000005640">
    <property type="component" value="Chromosome 5"/>
</dbReference>
<dbReference type="RNAct" id="P21796">
    <property type="molecule type" value="protein"/>
</dbReference>
<dbReference type="Bgee" id="ENSG00000213585">
    <property type="expression patterns" value="Expressed in biceps brachii and 203 other cell types or tissues"/>
</dbReference>
<dbReference type="ExpressionAtlas" id="P21796">
    <property type="expression patterns" value="baseline and differential"/>
</dbReference>
<dbReference type="GO" id="GO:0070062">
    <property type="term" value="C:extracellular exosome"/>
    <property type="evidence" value="ECO:0007005"/>
    <property type="project" value="UniProtKB"/>
</dbReference>
<dbReference type="GO" id="GO:0016020">
    <property type="term" value="C:membrane"/>
    <property type="evidence" value="ECO:0000314"/>
    <property type="project" value="UniProtKB"/>
</dbReference>
<dbReference type="GO" id="GO:0045121">
    <property type="term" value="C:membrane raft"/>
    <property type="evidence" value="ECO:0007669"/>
    <property type="project" value="UniProtKB-SubCell"/>
</dbReference>
<dbReference type="GO" id="GO:0031966">
    <property type="term" value="C:mitochondrial membrane"/>
    <property type="evidence" value="ECO:0000314"/>
    <property type="project" value="UniProtKB"/>
</dbReference>
<dbReference type="GO" id="GO:0042645">
    <property type="term" value="C:mitochondrial nucleoid"/>
    <property type="evidence" value="ECO:0000314"/>
    <property type="project" value="BHF-UCL"/>
</dbReference>
<dbReference type="GO" id="GO:0005741">
    <property type="term" value="C:mitochondrial outer membrane"/>
    <property type="evidence" value="ECO:0000314"/>
    <property type="project" value="UniProtKB"/>
</dbReference>
<dbReference type="GO" id="GO:0005757">
    <property type="term" value="C:mitochondrial permeability transition pore complex"/>
    <property type="evidence" value="ECO:0000314"/>
    <property type="project" value="UniProtKB"/>
</dbReference>
<dbReference type="GO" id="GO:0005739">
    <property type="term" value="C:mitochondrion"/>
    <property type="evidence" value="ECO:0000314"/>
    <property type="project" value="UniProtKB"/>
</dbReference>
<dbReference type="GO" id="GO:0005634">
    <property type="term" value="C:nucleus"/>
    <property type="evidence" value="ECO:0007005"/>
    <property type="project" value="UniProtKB"/>
</dbReference>
<dbReference type="GO" id="GO:0005886">
    <property type="term" value="C:plasma membrane"/>
    <property type="evidence" value="ECO:0000314"/>
    <property type="project" value="UniProtKB"/>
</dbReference>
<dbReference type="GO" id="GO:0046930">
    <property type="term" value="C:pore complex"/>
    <property type="evidence" value="ECO:0000304"/>
    <property type="project" value="HGNC-UCL"/>
</dbReference>
<dbReference type="GO" id="GO:0045202">
    <property type="term" value="C:synapse"/>
    <property type="evidence" value="ECO:0007669"/>
    <property type="project" value="GOC"/>
</dbReference>
<dbReference type="GO" id="GO:0005524">
    <property type="term" value="F:ATP binding"/>
    <property type="evidence" value="ECO:0007669"/>
    <property type="project" value="UniProtKB-KW"/>
</dbReference>
<dbReference type="GO" id="GO:0097001">
    <property type="term" value="F:ceramide binding"/>
    <property type="evidence" value="ECO:0000314"/>
    <property type="project" value="UniProtKB"/>
</dbReference>
<dbReference type="GO" id="GO:0015485">
    <property type="term" value="F:cholesterol binding"/>
    <property type="evidence" value="ECO:0000314"/>
    <property type="project" value="UniProtKB"/>
</dbReference>
<dbReference type="GO" id="GO:0042802">
    <property type="term" value="F:identical protein binding"/>
    <property type="evidence" value="ECO:0000353"/>
    <property type="project" value="IntAct"/>
</dbReference>
<dbReference type="GO" id="GO:0008142">
    <property type="term" value="F:oxysterol binding"/>
    <property type="evidence" value="ECO:0000250"/>
    <property type="project" value="UniProtKB"/>
</dbReference>
<dbReference type="GO" id="GO:0031210">
    <property type="term" value="F:phosphatidylcholine binding"/>
    <property type="evidence" value="ECO:0000314"/>
    <property type="project" value="UniProtKB"/>
</dbReference>
<dbReference type="GO" id="GO:0015288">
    <property type="term" value="F:porin activity"/>
    <property type="evidence" value="ECO:0007669"/>
    <property type="project" value="UniProtKB-KW"/>
</dbReference>
<dbReference type="GO" id="GO:0019901">
    <property type="term" value="F:protein kinase binding"/>
    <property type="evidence" value="ECO:0000353"/>
    <property type="project" value="ParkinsonsUK-UCL"/>
</dbReference>
<dbReference type="GO" id="GO:0044325">
    <property type="term" value="F:transmembrane transporter binding"/>
    <property type="evidence" value="ECO:0000353"/>
    <property type="project" value="UniProtKB"/>
</dbReference>
<dbReference type="GO" id="GO:0008308">
    <property type="term" value="F:voltage-gated monoatomic anion channel activity"/>
    <property type="evidence" value="ECO:0000314"/>
    <property type="project" value="UniProtKB"/>
</dbReference>
<dbReference type="GO" id="GO:0005244">
    <property type="term" value="F:voltage-gated monoatomic ion channel activity"/>
    <property type="evidence" value="ECO:0000314"/>
    <property type="project" value="UniProtKB"/>
</dbReference>
<dbReference type="GO" id="GO:0006915">
    <property type="term" value="P:apoptotic process"/>
    <property type="evidence" value="ECO:0000314"/>
    <property type="project" value="UniProtKB"/>
</dbReference>
<dbReference type="GO" id="GO:0001662">
    <property type="term" value="P:behavioral fear response"/>
    <property type="evidence" value="ECO:0007669"/>
    <property type="project" value="Ensembl"/>
</dbReference>
<dbReference type="GO" id="GO:0036444">
    <property type="term" value="P:calcium import into the mitochondrion"/>
    <property type="evidence" value="ECO:0000250"/>
    <property type="project" value="UniProtKB"/>
</dbReference>
<dbReference type="GO" id="GO:0030855">
    <property type="term" value="P:epithelial cell differentiation"/>
    <property type="evidence" value="ECO:0000270"/>
    <property type="project" value="UniProtKB"/>
</dbReference>
<dbReference type="GO" id="GO:0007612">
    <property type="term" value="P:learning"/>
    <property type="evidence" value="ECO:0007669"/>
    <property type="project" value="Ensembl"/>
</dbReference>
<dbReference type="GO" id="GO:0006869">
    <property type="term" value="P:lipid transport"/>
    <property type="evidence" value="ECO:0007669"/>
    <property type="project" value="UniProtKB-KW"/>
</dbReference>
<dbReference type="GO" id="GO:1990542">
    <property type="term" value="P:mitochondrial transmembrane transport"/>
    <property type="evidence" value="ECO:0000314"/>
    <property type="project" value="UniProtKB"/>
</dbReference>
<dbReference type="GO" id="GO:0006820">
    <property type="term" value="P:monoatomic anion transport"/>
    <property type="evidence" value="ECO:0000314"/>
    <property type="project" value="UniProtKB"/>
</dbReference>
<dbReference type="GO" id="GO:0043066">
    <property type="term" value="P:negative regulation of apoptotic process"/>
    <property type="evidence" value="ECO:0000315"/>
    <property type="project" value="UniProtKB"/>
</dbReference>
<dbReference type="GO" id="GO:0110099">
    <property type="term" value="P:negative regulation of calcium import into the mitochondrion"/>
    <property type="evidence" value="ECO:0000315"/>
    <property type="project" value="UniProtKB"/>
</dbReference>
<dbReference type="GO" id="GO:2000378">
    <property type="term" value="P:negative regulation of reactive oxygen species metabolic process"/>
    <property type="evidence" value="ECO:0007669"/>
    <property type="project" value="Ensembl"/>
</dbReference>
<dbReference type="GO" id="GO:0007270">
    <property type="term" value="P:neuron-neuron synaptic transmission"/>
    <property type="evidence" value="ECO:0007669"/>
    <property type="project" value="Ensembl"/>
</dbReference>
<dbReference type="GO" id="GO:0043065">
    <property type="term" value="P:positive regulation of apoptotic process"/>
    <property type="evidence" value="ECO:0000314"/>
    <property type="project" value="UniProt"/>
</dbReference>
<dbReference type="GO" id="GO:1905091">
    <property type="term" value="P:positive regulation of type 2 mitophagy"/>
    <property type="evidence" value="ECO:0000315"/>
    <property type="project" value="UniProtKB"/>
</dbReference>
<dbReference type="GO" id="GO:0006090">
    <property type="term" value="P:pyruvate metabolic process"/>
    <property type="evidence" value="ECO:0000304"/>
    <property type="project" value="Reactome"/>
</dbReference>
<dbReference type="GO" id="GO:1903146">
    <property type="term" value="P:regulation of autophagy of mitochondrion"/>
    <property type="evidence" value="ECO:0000303"/>
    <property type="project" value="ParkinsonsUK-UCL"/>
</dbReference>
<dbReference type="CDD" id="cd07306">
    <property type="entry name" value="Porin3_VDAC"/>
    <property type="match status" value="1"/>
</dbReference>
<dbReference type="FunFam" id="2.40.160.10:FF:000001">
    <property type="entry name" value="Voltage-dependent anion-selective channel protein 2"/>
    <property type="match status" value="1"/>
</dbReference>
<dbReference type="Gene3D" id="2.40.160.10">
    <property type="entry name" value="Porin"/>
    <property type="match status" value="1"/>
</dbReference>
<dbReference type="InterPro" id="IPR023614">
    <property type="entry name" value="Porin_dom_sf"/>
</dbReference>
<dbReference type="InterPro" id="IPR001925">
    <property type="entry name" value="Porin_Euk"/>
</dbReference>
<dbReference type="InterPro" id="IPR027246">
    <property type="entry name" value="Porin_Euk/Tom40"/>
</dbReference>
<dbReference type="PANTHER" id="PTHR11743">
    <property type="entry name" value="VOLTAGE-DEPENDENT ANION-SELECTIVE CHANNEL"/>
    <property type="match status" value="1"/>
</dbReference>
<dbReference type="PANTHER" id="PTHR11743:SF13">
    <property type="entry name" value="VOLTAGE-DEPENDENT ANION-SELECTIVE CHANNEL PROTEIN 1"/>
    <property type="match status" value="1"/>
</dbReference>
<dbReference type="Pfam" id="PF01459">
    <property type="entry name" value="Porin_3"/>
    <property type="match status" value="1"/>
</dbReference>
<dbReference type="PRINTS" id="PR00185">
    <property type="entry name" value="EUKARYTPORIN"/>
</dbReference>
<dbReference type="PROSITE" id="PS00558">
    <property type="entry name" value="EUKARYOTIC_PORIN"/>
    <property type="match status" value="1"/>
</dbReference>
<proteinExistence type="evidence at protein level"/>
<reference key="1">
    <citation type="journal article" date="1993" name="J. Biol. Chem.">
        <title>Cloning and functional expression in yeast of two human isoforms of the outer mitochondrial membrane channel, the voltage-dependent anion channel.</title>
        <authorList>
            <person name="Blachly-Dyson E."/>
            <person name="Zambronicz E.B."/>
            <person name="Yu W.H."/>
            <person name="Adams V."/>
            <person name="McCabe E.R."/>
            <person name="Adelman J.P."/>
            <person name="Colombini M."/>
            <person name="Forte M.A."/>
        </authorList>
    </citation>
    <scope>NUCLEOTIDE SEQUENCE [MRNA]</scope>
    <scope>FUNCTION</scope>
    <scope>TRANSPORTER ACTIVITY</scope>
    <scope>SUBUNIT</scope>
    <scope>TISSUE SPECIFICITY</scope>
</reference>
<reference key="2">
    <citation type="journal article" date="1991" name="Biophys. J.">
        <title>Cloning of human VDAC cDNA.</title>
        <authorList>
            <person name="Blachly-Dyson E."/>
            <person name="Forte M.A."/>
        </authorList>
    </citation>
    <scope>NUCLEOTIDE SEQUENCE [MRNA]</scope>
    <source>
        <tissue>Pituitary</tissue>
    </source>
</reference>
<reference key="3">
    <citation type="journal article" date="1999" name="Mamm. Genome">
        <title>Revised fine mapping of the human voltage-dependent anion channel loci by radiation hybrid analysis.</title>
        <authorList>
            <person name="Decker W.K."/>
            <person name="Bowles K.R."/>
            <person name="Schatte E.C."/>
            <person name="Towbin J.A."/>
            <person name="Craigen W.J."/>
        </authorList>
    </citation>
    <scope>NUCLEOTIDE SEQUENCE [GENOMIC DNA]</scope>
</reference>
<reference key="4">
    <citation type="journal article" date="2000" name="Biochem. Biophys. Res. Commun.">
        <title>Characterization of the human porin isoform 1 (HVDAC1) gene by amplification on the whole human genome: a tool for porin deficiency analysis.</title>
        <authorList>
            <person name="Messina A."/>
            <person name="Guarino F."/>
            <person name="Oliva M."/>
            <person name="van den Heuvel L.P."/>
            <person name="Smeitink J."/>
            <person name="De Pinto V."/>
        </authorList>
    </citation>
    <scope>NUCLEOTIDE SEQUENCE [GENOMIC DNA]</scope>
</reference>
<reference key="5">
    <citation type="journal article" date="2004" name="Nat. Genet.">
        <title>Complete sequencing and characterization of 21,243 full-length human cDNAs.</title>
        <authorList>
            <person name="Ota T."/>
            <person name="Suzuki Y."/>
            <person name="Nishikawa T."/>
            <person name="Otsuki T."/>
            <person name="Sugiyama T."/>
            <person name="Irie R."/>
            <person name="Wakamatsu A."/>
            <person name="Hayashi K."/>
            <person name="Sato H."/>
            <person name="Nagai K."/>
            <person name="Kimura K."/>
            <person name="Makita H."/>
            <person name="Sekine M."/>
            <person name="Obayashi M."/>
            <person name="Nishi T."/>
            <person name="Shibahara T."/>
            <person name="Tanaka T."/>
            <person name="Ishii S."/>
            <person name="Yamamoto J."/>
            <person name="Saito K."/>
            <person name="Kawai Y."/>
            <person name="Isono Y."/>
            <person name="Nakamura Y."/>
            <person name="Nagahari K."/>
            <person name="Murakami K."/>
            <person name="Yasuda T."/>
            <person name="Iwayanagi T."/>
            <person name="Wagatsuma M."/>
            <person name="Shiratori A."/>
            <person name="Sudo H."/>
            <person name="Hosoiri T."/>
            <person name="Kaku Y."/>
            <person name="Kodaira H."/>
            <person name="Kondo H."/>
            <person name="Sugawara M."/>
            <person name="Takahashi M."/>
            <person name="Kanda K."/>
            <person name="Yokoi T."/>
            <person name="Furuya T."/>
            <person name="Kikkawa E."/>
            <person name="Omura Y."/>
            <person name="Abe K."/>
            <person name="Kamihara K."/>
            <person name="Katsuta N."/>
            <person name="Sato K."/>
            <person name="Tanikawa M."/>
            <person name="Yamazaki M."/>
            <person name="Ninomiya K."/>
            <person name="Ishibashi T."/>
            <person name="Yamashita H."/>
            <person name="Murakawa K."/>
            <person name="Fujimori K."/>
            <person name="Tanai H."/>
            <person name="Kimata M."/>
            <person name="Watanabe M."/>
            <person name="Hiraoka S."/>
            <person name="Chiba Y."/>
            <person name="Ishida S."/>
            <person name="Ono Y."/>
            <person name="Takiguchi S."/>
            <person name="Watanabe S."/>
            <person name="Yosida M."/>
            <person name="Hotuta T."/>
            <person name="Kusano J."/>
            <person name="Kanehori K."/>
            <person name="Takahashi-Fujii A."/>
            <person name="Hara H."/>
            <person name="Tanase T.-O."/>
            <person name="Nomura Y."/>
            <person name="Togiya S."/>
            <person name="Komai F."/>
            <person name="Hara R."/>
            <person name="Takeuchi K."/>
            <person name="Arita M."/>
            <person name="Imose N."/>
            <person name="Musashino K."/>
            <person name="Yuuki H."/>
            <person name="Oshima A."/>
            <person name="Sasaki N."/>
            <person name="Aotsuka S."/>
            <person name="Yoshikawa Y."/>
            <person name="Matsunawa H."/>
            <person name="Ichihara T."/>
            <person name="Shiohata N."/>
            <person name="Sano S."/>
            <person name="Moriya S."/>
            <person name="Momiyama H."/>
            <person name="Satoh N."/>
            <person name="Takami S."/>
            <person name="Terashima Y."/>
            <person name="Suzuki O."/>
            <person name="Nakagawa S."/>
            <person name="Senoh A."/>
            <person name="Mizoguchi H."/>
            <person name="Goto Y."/>
            <person name="Shimizu F."/>
            <person name="Wakebe H."/>
            <person name="Hishigaki H."/>
            <person name="Watanabe T."/>
            <person name="Sugiyama A."/>
            <person name="Takemoto M."/>
            <person name="Kawakami B."/>
            <person name="Yamazaki M."/>
            <person name="Watanabe K."/>
            <person name="Kumagai A."/>
            <person name="Itakura S."/>
            <person name="Fukuzumi Y."/>
            <person name="Fujimori Y."/>
            <person name="Komiyama M."/>
            <person name="Tashiro H."/>
            <person name="Tanigami A."/>
            <person name="Fujiwara T."/>
            <person name="Ono T."/>
            <person name="Yamada K."/>
            <person name="Fujii Y."/>
            <person name="Ozaki K."/>
            <person name="Hirao M."/>
            <person name="Ohmori Y."/>
            <person name="Kawabata A."/>
            <person name="Hikiji T."/>
            <person name="Kobatake N."/>
            <person name="Inagaki H."/>
            <person name="Ikema Y."/>
            <person name="Okamoto S."/>
            <person name="Okitani R."/>
            <person name="Kawakami T."/>
            <person name="Noguchi S."/>
            <person name="Itoh T."/>
            <person name="Shigeta K."/>
            <person name="Senba T."/>
            <person name="Matsumura K."/>
            <person name="Nakajima Y."/>
            <person name="Mizuno T."/>
            <person name="Morinaga M."/>
            <person name="Sasaki M."/>
            <person name="Togashi T."/>
            <person name="Oyama M."/>
            <person name="Hata H."/>
            <person name="Watanabe M."/>
            <person name="Komatsu T."/>
            <person name="Mizushima-Sugano J."/>
            <person name="Satoh T."/>
            <person name="Shirai Y."/>
            <person name="Takahashi Y."/>
            <person name="Nakagawa K."/>
            <person name="Okumura K."/>
            <person name="Nagase T."/>
            <person name="Nomura N."/>
            <person name="Kikuchi H."/>
            <person name="Masuho Y."/>
            <person name="Yamashita R."/>
            <person name="Nakai K."/>
            <person name="Yada T."/>
            <person name="Nakamura Y."/>
            <person name="Ohara O."/>
            <person name="Isogai T."/>
            <person name="Sugano S."/>
        </authorList>
    </citation>
    <scope>NUCLEOTIDE SEQUENCE [LARGE SCALE MRNA]</scope>
    <source>
        <tissue>Thymus</tissue>
    </source>
</reference>
<reference key="6">
    <citation type="journal article" date="2004" name="Nature">
        <title>The DNA sequence and comparative analysis of human chromosome 5.</title>
        <authorList>
            <person name="Schmutz J."/>
            <person name="Martin J."/>
            <person name="Terry A."/>
            <person name="Couronne O."/>
            <person name="Grimwood J."/>
            <person name="Lowry S."/>
            <person name="Gordon L.A."/>
            <person name="Scott D."/>
            <person name="Xie G."/>
            <person name="Huang W."/>
            <person name="Hellsten U."/>
            <person name="Tran-Gyamfi M."/>
            <person name="She X."/>
            <person name="Prabhakar S."/>
            <person name="Aerts A."/>
            <person name="Altherr M."/>
            <person name="Bajorek E."/>
            <person name="Black S."/>
            <person name="Branscomb E."/>
            <person name="Caoile C."/>
            <person name="Challacombe J.F."/>
            <person name="Chan Y.M."/>
            <person name="Denys M."/>
            <person name="Detter J.C."/>
            <person name="Escobar J."/>
            <person name="Flowers D."/>
            <person name="Fotopulos D."/>
            <person name="Glavina T."/>
            <person name="Gomez M."/>
            <person name="Gonzales E."/>
            <person name="Goodstein D."/>
            <person name="Grigoriev I."/>
            <person name="Groza M."/>
            <person name="Hammon N."/>
            <person name="Hawkins T."/>
            <person name="Haydu L."/>
            <person name="Israni S."/>
            <person name="Jett J."/>
            <person name="Kadner K."/>
            <person name="Kimball H."/>
            <person name="Kobayashi A."/>
            <person name="Lopez F."/>
            <person name="Lou Y."/>
            <person name="Martinez D."/>
            <person name="Medina C."/>
            <person name="Morgan J."/>
            <person name="Nandkeshwar R."/>
            <person name="Noonan J.P."/>
            <person name="Pitluck S."/>
            <person name="Pollard M."/>
            <person name="Predki P."/>
            <person name="Priest J."/>
            <person name="Ramirez L."/>
            <person name="Retterer J."/>
            <person name="Rodriguez A."/>
            <person name="Rogers S."/>
            <person name="Salamov A."/>
            <person name="Salazar A."/>
            <person name="Thayer N."/>
            <person name="Tice H."/>
            <person name="Tsai M."/>
            <person name="Ustaszewska A."/>
            <person name="Vo N."/>
            <person name="Wheeler J."/>
            <person name="Wu K."/>
            <person name="Yang J."/>
            <person name="Dickson M."/>
            <person name="Cheng J.-F."/>
            <person name="Eichler E.E."/>
            <person name="Olsen A."/>
            <person name="Pennacchio L.A."/>
            <person name="Rokhsar D.S."/>
            <person name="Richardson P."/>
            <person name="Lucas S.M."/>
            <person name="Myers R.M."/>
            <person name="Rubin E.M."/>
        </authorList>
    </citation>
    <scope>NUCLEOTIDE SEQUENCE [LARGE SCALE GENOMIC DNA]</scope>
</reference>
<reference key="7">
    <citation type="submission" date="2005-09" db="EMBL/GenBank/DDBJ databases">
        <authorList>
            <person name="Mural R.J."/>
            <person name="Istrail S."/>
            <person name="Sutton G.G."/>
            <person name="Florea L."/>
            <person name="Halpern A.L."/>
            <person name="Mobarry C.M."/>
            <person name="Lippert R."/>
            <person name="Walenz B."/>
            <person name="Shatkay H."/>
            <person name="Dew I."/>
            <person name="Miller J.R."/>
            <person name="Flanigan M.J."/>
            <person name="Edwards N.J."/>
            <person name="Bolanos R."/>
            <person name="Fasulo D."/>
            <person name="Halldorsson B.V."/>
            <person name="Hannenhalli S."/>
            <person name="Turner R."/>
            <person name="Yooseph S."/>
            <person name="Lu F."/>
            <person name="Nusskern D.R."/>
            <person name="Shue B.C."/>
            <person name="Zheng X.H."/>
            <person name="Zhong F."/>
            <person name="Delcher A.L."/>
            <person name="Huson D.H."/>
            <person name="Kravitz S.A."/>
            <person name="Mouchard L."/>
            <person name="Reinert K."/>
            <person name="Remington K.A."/>
            <person name="Clark A.G."/>
            <person name="Waterman M.S."/>
            <person name="Eichler E.E."/>
            <person name="Adams M.D."/>
            <person name="Hunkapiller M.W."/>
            <person name="Myers E.W."/>
            <person name="Venter J.C."/>
        </authorList>
    </citation>
    <scope>NUCLEOTIDE SEQUENCE [LARGE SCALE GENOMIC DNA]</scope>
</reference>
<reference key="8">
    <citation type="journal article" date="2004" name="Genome Res.">
        <title>The status, quality, and expansion of the NIH full-length cDNA project: the Mammalian Gene Collection (MGC).</title>
        <authorList>
            <consortium name="The MGC Project Team"/>
        </authorList>
    </citation>
    <scope>NUCLEOTIDE SEQUENCE [LARGE SCALE MRNA]</scope>
    <source>
        <tissue>Lung</tissue>
        <tissue>Skin</tissue>
    </source>
</reference>
<reference key="9">
    <citation type="journal article" date="1989" name="Biol. Chem. Hoppe-Seyler">
        <title>Identification of human porins. II. Characterization and primary structure of a 31-lDa porin from human B lymphocytes (Porin 31HL).</title>
        <authorList>
            <person name="Kayser H."/>
            <person name="Kratzin H.D."/>
            <person name="Thinnes F.P."/>
            <person name="Goetz H."/>
            <person name="Schmidt W.E."/>
            <person name="Eckart K."/>
            <person name="Hilschmann N."/>
        </authorList>
    </citation>
    <scope>PROTEIN SEQUENCE OF 2-283</scope>
    <source>
        <tissue>Lymphocyte</tissue>
    </source>
</reference>
<reference key="10">
    <citation type="journal article" date="1991" name="Biol. Chem. Hoppe-Seyler">
        <title>Studies on human porin. IV. The primary structures of 'Porin 31HM' purified from human skeletal muscle membranes and of 'Porin 31HL' derived from human B lymphocyte membranes are identical.</title>
        <authorList>
            <person name="Juergens L."/>
            <person name="Ilsemann P."/>
            <person name="Kratzin H.D."/>
            <person name="Hesse D."/>
            <person name="Eckart K."/>
            <person name="Thinnes F.P."/>
            <person name="Hilschmann N."/>
        </authorList>
    </citation>
    <scope>PROTEIN SEQUENCE OF 2-283</scope>
    <source>
        <tissue>Skeletal muscle</tissue>
    </source>
</reference>
<reference key="11">
    <citation type="submission" date="1997-12" db="UniProtKB">
        <authorList>
            <person name="Hein A."/>
            <person name="Kiafard Z."/>
            <person name="Hesse D."/>
            <person name="Hesse J.-O."/>
            <person name="Zimmermann B."/>
            <person name="Kratzin H.D."/>
            <person name="Schulz H."/>
            <person name="Reiss J."/>
            <person name="Thinnes F.P."/>
            <person name="Goetz H."/>
            <person name="Hilschmann N."/>
        </authorList>
    </citation>
    <scope>PROTEIN SEQUENCE OF 2-283</scope>
    <source>
        <tissue>B-cell</tissue>
    </source>
</reference>
<reference key="12">
    <citation type="submission" date="2005-03" db="UniProtKB">
        <authorList>
            <person name="Bienvenut W.V."/>
        </authorList>
    </citation>
    <scope>PROTEIN SEQUENCE OF 2-12; 21-61; 64-74; 94-110; 121-139; 162-174; 225-236 AND 257-274</scope>
    <scope>CLEAVAGE OF INITIATOR METHIONINE</scope>
    <scope>ACETYLATION AT ALA-2</scope>
    <scope>IDENTIFICATION BY MASS SPECTROMETRY</scope>
    <source>
        <tissue>B-cell lymphoma</tissue>
    </source>
</reference>
<reference key="13">
    <citation type="submission" date="2008-12" db="UniProtKB">
        <authorList>
            <person name="Lubec G."/>
            <person name="Vishwanath V."/>
            <person name="Chen W.-Q."/>
            <person name="Sun Y."/>
        </authorList>
    </citation>
    <scope>PROTEIN SEQUENCE OF 75-93; 175-197 AND 201-218</scope>
    <scope>IDENTIFICATION BY MASS SPECTROMETRY</scope>
    <source>
        <tissue>Brain</tissue>
        <tissue>Cajal-Retzius cell</tissue>
        <tissue>Fetal brain cortex</tissue>
    </source>
</reference>
<reference key="14">
    <citation type="journal article" date="1993" name="Proc. Natl. Acad. Sci. U.S.A.">
        <title>Mapping of residues forming the voltage sensor of the voltage-dependent anion-selective channel.</title>
        <authorList>
            <person name="Thomas L."/>
            <person name="Blachly-Dyson E."/>
            <person name="Colombini M."/>
            <person name="Forte M.A."/>
        </authorList>
    </citation>
    <scope>MUTAGENESIS</scope>
</reference>
<reference key="15">
    <citation type="journal article" date="1995" name="J. Biol. Chem.">
        <title>Subcellular localization of human voltage-dependent anion channel isoforms.</title>
        <authorList>
            <person name="Yu W.H."/>
            <person name="Wolfgang W."/>
            <person name="Forte M.A."/>
        </authorList>
    </citation>
    <scope>SUBCELLULAR LOCATION</scope>
</reference>
<reference key="16">
    <citation type="journal article" date="1999" name="Biol. Chem.">
        <title>Mitochondria-derived and extra-mitochondrial human type-1 porin are identical as revealed by amino acid sequencing and electrophysiological characterisation.</title>
        <authorList>
            <person name="Stadtmueller U."/>
            <person name="Eben-Brunnen J."/>
            <person name="Schmid A."/>
            <person name="Hesse D."/>
            <person name="Klebert S."/>
            <person name="Kratzin H.D."/>
            <person name="Hesse J."/>
            <person name="Zimmermann B."/>
            <person name="Reymann S."/>
            <person name="Thinnes F.P."/>
            <person name="Benz R."/>
            <person name="Goetz H."/>
            <person name="Hilschmann N."/>
        </authorList>
    </citation>
    <scope>FUNCTION</scope>
    <scope>SUBCELLULAR LOCATION</scope>
    <scope>PARTIAL PROTEIN SEQUENCE</scope>
</reference>
<reference key="17">
    <citation type="journal article" date="2001" name="Pflugers Arch.">
        <title>Gadolinium as an opener of the outwardly rectifying Cl(-) channel (ORCC). Is there relevance for cystic fibrosis therapy?</title>
        <authorList>
            <person name="Thinnes F.P."/>
            <person name="Walter G."/>
            <person name="Hellmann K.P."/>
            <person name="Hellmann T."/>
            <person name="Merker R."/>
            <person name="Kiafard Z."/>
            <person name="Eben-Brunnen J."/>
            <person name="Schwarzer C."/>
            <person name="Goetz H."/>
            <person name="Hilschmann N."/>
        </authorList>
    </citation>
    <scope>FUNCTION</scope>
</reference>
<reference key="18">
    <citation type="journal article" date="2003" name="Ann. N. Y. Acad. Sci.">
        <title>Study of PTPC composition during apoptosis for identification of viral protein target.</title>
        <authorList>
            <person name="Verrier F."/>
            <person name="Mignotte B."/>
            <person name="Jan G."/>
            <person name="Brenner C."/>
        </authorList>
    </citation>
    <scope>FUNCTION IN APOPTOSIS</scope>
</reference>
<reference key="19">
    <citation type="journal article" date="2005" name="PLoS Pathog.">
        <title>Influenza virus PB1-F2 protein induces cell death through mitochondrial ANT3 and VDAC1.</title>
        <authorList>
            <person name="Zamarin D."/>
            <person name="Garcia-Sastre A."/>
            <person name="Xiao X."/>
            <person name="Wang R."/>
            <person name="Palese P."/>
        </authorList>
    </citation>
    <scope>INTERACTION WITH INFLUENZA A VIRUS PB1-F2</scope>
</reference>
<reference key="20">
    <citation type="journal article" date="2006" name="Cell">
        <title>Global, in vivo, and site-specific phosphorylation dynamics in signaling networks.</title>
        <authorList>
            <person name="Olsen J.V."/>
            <person name="Blagoev B."/>
            <person name="Gnad F."/>
            <person name="Macek B."/>
            <person name="Kumar C."/>
            <person name="Mortensen P."/>
            <person name="Mann M."/>
        </authorList>
    </citation>
    <scope>IDENTIFICATION BY MASS SPECTROMETRY [LARGE SCALE ANALYSIS]</scope>
    <source>
        <tissue>Cervix carcinoma</tissue>
    </source>
</reference>
<reference key="21">
    <citation type="journal article" date="2008" name="J. Proteome Res.">
        <title>Phosphoproteome of resting human platelets.</title>
        <authorList>
            <person name="Zahedi R.P."/>
            <person name="Lewandrowski U."/>
            <person name="Wiesner J."/>
            <person name="Wortelkamp S."/>
            <person name="Moebius J."/>
            <person name="Schuetz C."/>
            <person name="Walter U."/>
            <person name="Gambaryan S."/>
            <person name="Sickmann A."/>
        </authorList>
    </citation>
    <scope>IDENTIFICATION BY MASS SPECTROMETRY [LARGE SCALE ANALYSIS]</scope>
    <source>
        <tissue>Platelet</tissue>
    </source>
</reference>
<reference key="22">
    <citation type="journal article" date="2008" name="Mol. Cell">
        <title>Kinase-selective enrichment enables quantitative phosphoproteomics of the kinome across the cell cycle.</title>
        <authorList>
            <person name="Daub H."/>
            <person name="Olsen J.V."/>
            <person name="Bairlein M."/>
            <person name="Gnad F."/>
            <person name="Oppermann F.S."/>
            <person name="Korner R."/>
            <person name="Greff Z."/>
            <person name="Keri G."/>
            <person name="Stemmann O."/>
            <person name="Mann M."/>
        </authorList>
    </citation>
    <scope>IDENTIFICATION BY MASS SPECTROMETRY [LARGE SCALE ANALYSIS]</scope>
    <source>
        <tissue>Cervix carcinoma</tissue>
    </source>
</reference>
<reference key="23">
    <citation type="journal article" date="2008" name="Proc. Natl. Acad. Sci. U.S.A.">
        <title>A quantitative atlas of mitotic phosphorylation.</title>
        <authorList>
            <person name="Dephoure N."/>
            <person name="Zhou C."/>
            <person name="Villen J."/>
            <person name="Beausoleil S.A."/>
            <person name="Bakalarski C.E."/>
            <person name="Elledge S.J."/>
            <person name="Gygi S.P."/>
        </authorList>
    </citation>
    <scope>IDENTIFICATION BY MASS SPECTROMETRY [LARGE SCALE ANALYSIS]</scope>
    <source>
        <tissue>Cervix carcinoma</tissue>
    </source>
</reference>
<reference key="24">
    <citation type="journal article" date="2009" name="Anal. Chem.">
        <title>Lys-N and trypsin cover complementary parts of the phosphoproteome in a refined SCX-based approach.</title>
        <authorList>
            <person name="Gauci S."/>
            <person name="Helbig A.O."/>
            <person name="Slijper M."/>
            <person name="Krijgsveld J."/>
            <person name="Heck A.J."/>
            <person name="Mohammed S."/>
        </authorList>
    </citation>
    <scope>ACETYLATION [LARGE SCALE ANALYSIS] AT ALA-2</scope>
    <scope>CLEAVAGE OF INITIATOR METHIONINE [LARGE SCALE ANALYSIS]</scope>
    <scope>IDENTIFICATION BY MASS SPECTROMETRY [LARGE SCALE ANALYSIS]</scope>
</reference>
<reference key="25">
    <citation type="journal article" date="2009" name="Science">
        <title>Lysine acetylation targets protein complexes and co-regulates major cellular functions.</title>
        <authorList>
            <person name="Choudhary C."/>
            <person name="Kumar C."/>
            <person name="Gnad F."/>
            <person name="Nielsen M.L."/>
            <person name="Rehman M."/>
            <person name="Walther T.C."/>
            <person name="Olsen J.V."/>
            <person name="Mann M."/>
        </authorList>
    </citation>
    <scope>ACETYLATION [LARGE SCALE ANALYSIS] AT LYS-20 AND LYS-266</scope>
    <scope>IDENTIFICATION BY MASS SPECTROMETRY [LARGE SCALE ANALYSIS]</scope>
</reference>
<reference key="26">
    <citation type="journal article" date="2010" name="Biochem. Biophys. Res. Commun.">
        <title>Phosphorylation by Nek1 regulates opening and closing of voltage dependent anion channel 1.</title>
        <authorList>
            <person name="Chen Y."/>
            <person name="Gaczynska M."/>
            <person name="Osmulski P."/>
            <person name="Polci R."/>
            <person name="Riley D.J."/>
        </authorList>
    </citation>
    <scope>FUNCTION</scope>
    <scope>TRANSPORTER ACTIVITY</scope>
    <scope>PHOSPHORYLATION AT SER-193</scope>
    <scope>MUTAGENESIS OF SER-193</scope>
</reference>
<reference key="27">
    <citation type="journal article" date="2010" name="Sci. Signal.">
        <title>Quantitative phosphoproteomics reveals widespread full phosphorylation site occupancy during mitosis.</title>
        <authorList>
            <person name="Olsen J.V."/>
            <person name="Vermeulen M."/>
            <person name="Santamaria A."/>
            <person name="Kumar C."/>
            <person name="Miller M.L."/>
            <person name="Jensen L.J."/>
            <person name="Gnad F."/>
            <person name="Cox J."/>
            <person name="Jensen T.S."/>
            <person name="Nigg E.A."/>
            <person name="Brunak S."/>
            <person name="Mann M."/>
        </authorList>
    </citation>
    <scope>IDENTIFICATION BY MASS SPECTROMETRY [LARGE SCALE ANALYSIS]</scope>
    <source>
        <tissue>Cervix carcinoma</tissue>
    </source>
</reference>
<reference key="28">
    <citation type="journal article" date="2011" name="BMC Syst. Biol.">
        <title>Initial characterization of the human central proteome.</title>
        <authorList>
            <person name="Burkard T.R."/>
            <person name="Planyavsky M."/>
            <person name="Kaupe I."/>
            <person name="Breitwieser F.P."/>
            <person name="Buerckstuemmer T."/>
            <person name="Bennett K.L."/>
            <person name="Superti-Furga G."/>
            <person name="Colinge J."/>
        </authorList>
    </citation>
    <scope>IDENTIFICATION BY MASS SPECTROMETRY [LARGE SCALE ANALYSIS]</scope>
</reference>
<reference key="29">
    <citation type="journal article" date="2011" name="Sci. Signal.">
        <title>System-wide temporal characterization of the proteome and phosphoproteome of human embryonic stem cell differentiation.</title>
        <authorList>
            <person name="Rigbolt K.T."/>
            <person name="Prokhorova T.A."/>
            <person name="Akimov V."/>
            <person name="Henningsen J."/>
            <person name="Johansen P.T."/>
            <person name="Kratchmarova I."/>
            <person name="Kassem M."/>
            <person name="Mann M."/>
            <person name="Olsen J.V."/>
            <person name="Blagoev B."/>
        </authorList>
    </citation>
    <scope>IDENTIFICATION BY MASS SPECTROMETRY [LARGE SCALE ANALYSIS]</scope>
</reference>
<reference key="30">
    <citation type="journal article" date="2012" name="Cell">
        <title>PKCepsilon promotes oncogenic functions of ATF2 in the nucleus while blocking its apoptotic function at mitochondria.</title>
        <authorList>
            <person name="Lau E."/>
            <person name="Kluger H."/>
            <person name="Varsano T."/>
            <person name="Lee K."/>
            <person name="Scheffler I."/>
            <person name="Rimm D.L."/>
            <person name="Ideker T."/>
            <person name="Ronai Z.A."/>
        </authorList>
    </citation>
    <scope>INTERACTION WITH ATF2 AND HK1</scope>
</reference>
<reference key="31">
    <citation type="journal article" date="2012" name="Mol. Cell. Proteomics">
        <title>Comparative large-scale characterisation of plant vs. mammal proteins reveals similar and idiosyncratic N-alpha acetylation features.</title>
        <authorList>
            <person name="Bienvenut W.V."/>
            <person name="Sumpton D."/>
            <person name="Martinez A."/>
            <person name="Lilla S."/>
            <person name="Espagne C."/>
            <person name="Meinnel T."/>
            <person name="Giglione C."/>
        </authorList>
    </citation>
    <scope>ACETYLATION [LARGE SCALE ANALYSIS] AT ALA-2</scope>
    <scope>CLEAVAGE OF INITIATOR METHIONINE [LARGE SCALE ANALYSIS]</scope>
    <scope>IDENTIFICATION BY MASS SPECTROMETRY [LARGE SCALE ANALYSIS]</scope>
</reference>
<reference key="32">
    <citation type="journal article" date="2012" name="Proc. Natl. Acad. Sci. U.S.A.">
        <title>N-terminal acetylome analyses and functional insights of the N-terminal acetyltransferase NatB.</title>
        <authorList>
            <person name="Van Damme P."/>
            <person name="Lasa M."/>
            <person name="Polevoda B."/>
            <person name="Gazquez C."/>
            <person name="Elosegui-Artola A."/>
            <person name="Kim D.S."/>
            <person name="De Juan-Pardo E."/>
            <person name="Demeyer K."/>
            <person name="Hole K."/>
            <person name="Larrea E."/>
            <person name="Timmerman E."/>
            <person name="Prieto J."/>
            <person name="Arnesen T."/>
            <person name="Sherman F."/>
            <person name="Gevaert K."/>
            <person name="Aldabe R."/>
        </authorList>
    </citation>
    <scope>ACETYLATION [LARGE SCALE ANALYSIS] AT ALA-2</scope>
    <scope>CLEAVAGE OF INITIATOR METHIONINE [LARGE SCALE ANALYSIS]</scope>
    <scope>IDENTIFICATION BY MASS SPECTROMETRY [LARGE SCALE ANALYSIS]</scope>
</reference>
<reference key="33">
    <citation type="journal article" date="2012" name="Protein Cell">
        <title>Human Bop is a novel BH3-only member of the Bcl-2 protein family.</title>
        <authorList>
            <person name="Zhang X."/>
            <person name="Weng C."/>
            <person name="Li Y."/>
            <person name="Wang X."/>
            <person name="Jiang C."/>
            <person name="Li X."/>
            <person name="Xu Y."/>
            <person name="Chen Q."/>
            <person name="Pan L."/>
            <person name="Tang H."/>
        </authorList>
    </citation>
    <scope>INTERACTION WITH RTL10/BOP</scope>
</reference>
<reference key="34">
    <citation type="journal article" date="2013" name="J. Proteome Res.">
        <title>Toward a comprehensive characterization of a human cancer cell phosphoproteome.</title>
        <authorList>
            <person name="Zhou H."/>
            <person name="Di Palma S."/>
            <person name="Preisinger C."/>
            <person name="Peng M."/>
            <person name="Polat A.N."/>
            <person name="Heck A.J."/>
            <person name="Mohammed S."/>
        </authorList>
    </citation>
    <scope>PHOSPHORYLATION [LARGE SCALE ANALYSIS] AT THR-107 AND SER-240</scope>
    <scope>IDENTIFICATION BY MASS SPECTROMETRY [LARGE SCALE ANALYSIS]</scope>
    <source>
        <tissue>Cervix carcinoma</tissue>
        <tissue>Erythroleukemia</tissue>
    </source>
</reference>
<reference key="35">
    <citation type="journal article" date="2014" name="J. Proteomics">
        <title>An enzyme assisted RP-RPLC approach for in-depth analysis of human liver phosphoproteome.</title>
        <authorList>
            <person name="Bian Y."/>
            <person name="Song C."/>
            <person name="Cheng K."/>
            <person name="Dong M."/>
            <person name="Wang F."/>
            <person name="Huang J."/>
            <person name="Sun D."/>
            <person name="Wang L."/>
            <person name="Ye M."/>
            <person name="Zou H."/>
        </authorList>
    </citation>
    <scope>IDENTIFICATION BY MASS SPECTROMETRY [LARGE SCALE ANALYSIS]</scope>
    <source>
        <tissue>Liver</tissue>
    </source>
</reference>
<reference key="36">
    <citation type="journal article" date="2015" name="Mol. Cell">
        <title>SPG7 is an essential and conserved component of the mitochondrial permeability transition pore.</title>
        <authorList>
            <person name="Shanmughapriya S."/>
            <person name="Rajan S."/>
            <person name="Hoffman N.E."/>
            <person name="Higgins A.M."/>
            <person name="Tomar D."/>
            <person name="Nemani N."/>
            <person name="Hines K.J."/>
            <person name="Smith D.J."/>
            <person name="Eguchi A."/>
            <person name="Vallem S."/>
            <person name="Shaikh F."/>
            <person name="Cheung M."/>
            <person name="Leonard N.J."/>
            <person name="Stolakis R.S."/>
            <person name="Wolfers M.P."/>
            <person name="Ibetti J."/>
            <person name="Chuprun J.K."/>
            <person name="Jog N.R."/>
            <person name="Houser S.R."/>
            <person name="Koch W.J."/>
            <person name="Elrod J.W."/>
            <person name="Madesh M."/>
        </authorList>
    </citation>
    <scope>IDENTIFICATION IN THE MITOCHONDRIAL PERMEABILITY TRANSITION PORE COMPLEX</scope>
    <scope>INTERACTION WITH SPG7; NIPSNAP2 AND SLC25A30</scope>
</reference>
<reference key="37">
    <citation type="journal article" date="2015" name="Nat. Cell Biol.">
        <title>USP30 and parkin homeostatically regulate atypical ubiquitin chains on mitochondria.</title>
        <authorList>
            <person name="Cunningham C.N."/>
            <person name="Baughman J.M."/>
            <person name="Phu L."/>
            <person name="Tea J.S."/>
            <person name="Yu C."/>
            <person name="Coons M."/>
            <person name="Kirkpatrick D.S."/>
            <person name="Bingol B."/>
            <person name="Corn J.E."/>
        </authorList>
    </citation>
    <scope>UBIQUITINATION AT LYS-53; LYS-61; LYS-109; LYS-110; LYS-161; LYS-266 AND LYS-274</scope>
</reference>
<reference key="38">
    <citation type="journal article" date="2011" name="FEBS Lett.">
        <title>Biphasic effect of nitric oxide on the cardiac voltage-dependent anion channel.</title>
        <authorList>
            <person name="Cheng Q."/>
            <person name="Sedlic F."/>
            <person name="Pravdic D."/>
            <person name="Bosnjak Z.J."/>
            <person name="Kwok W.M."/>
        </authorList>
    </citation>
    <scope>FUNCTION</scope>
    <scope>ACTIVITY REGULATION</scope>
</reference>
<reference key="39">
    <citation type="journal article" date="2014" name="J. Biol. Chem.">
        <title>Plasminogen kringle 5 induces endothelial cell apoptosis by triggering a voltage-dependent anion channel 1 (VDAC1) positive feedback loop.</title>
        <authorList>
            <person name="Li L."/>
            <person name="Yao Y.C."/>
            <person name="Gu X.Q."/>
            <person name="Che D."/>
            <person name="Ma C.Q."/>
            <person name="Dai Z.Y."/>
            <person name="Li C."/>
            <person name="Zhou T."/>
            <person name="Cai W.B."/>
            <person name="Yang Z.H."/>
            <person name="Yang X."/>
            <person name="Gao G.Q."/>
        </authorList>
    </citation>
    <scope>FUNCTION</scope>
    <scope>INTERACTION WITH BAK1 AND BCL2L1</scope>
    <scope>SUBCELLULAR LOCATION</scope>
</reference>
<reference key="40">
    <citation type="journal article" date="2014" name="Neuroscience">
        <title>Abeta promotes VDAC1 channel dephosphorylation in neuronal lipid rafts. Relevance to the mechanisms of neurotoxicity in Alzheimer's disease.</title>
        <authorList>
            <person name="Fernandez-Echevarria C."/>
            <person name="Diaz M."/>
            <person name="Ferrer I."/>
            <person name="Canerina-Amaro A."/>
            <person name="Marin R."/>
        </authorList>
    </citation>
    <scope>INTERACTION WITH AMYLOID-BETA AND APP</scope>
    <scope>SUBCELLULAR LOCATION</scope>
</reference>
<reference key="41">
    <citation type="journal article" date="2015" name="Proteomics">
        <title>N-terminome analysis of the human mitochondrial proteome.</title>
        <authorList>
            <person name="Vaca Jacome A.S."/>
            <person name="Rabilloud T."/>
            <person name="Schaeffer-Reiss C."/>
            <person name="Rompais M."/>
            <person name="Ayoub D."/>
            <person name="Lane L."/>
            <person name="Bairoch A."/>
            <person name="Van Dorsselaer A."/>
            <person name="Carapito C."/>
        </authorList>
    </citation>
    <scope>ACETYLATION [LARGE SCALE ANALYSIS] AT ALA-2</scope>
    <scope>CLEAVAGE OF INITIATOR METHIONINE [LARGE SCALE ANALYSIS]</scope>
    <scope>IDENTIFICATION BY MASS SPECTROMETRY [LARGE SCALE ANALYSIS]</scope>
</reference>
<reference key="42">
    <citation type="journal article" date="2016" name="Sci. Rep.">
        <title>TSPO ligands stimulate ZnPPIX transport and ROS accumulation leading to the inhibition of P. falciparum growth in human blood.</title>
        <authorList>
            <person name="Marginedas-Freixa I."/>
            <person name="Hattab C."/>
            <person name="Bouyer G."/>
            <person name="Halle F."/>
            <person name="Chene A."/>
            <person name="Lefevre S.D."/>
            <person name="Cambot M."/>
            <person name="Cueff A."/>
            <person name="Schmitt M."/>
            <person name="Gamain B."/>
            <person name="Lacapere J.J."/>
            <person name="Egee S."/>
            <person name="Bihel F."/>
            <person name="Le Van Kim C."/>
            <person name="Ostuni M.A."/>
        </authorList>
    </citation>
    <scope>SUBCELLULAR LOCATION</scope>
    <scope>TISSUE SPECIFICITY</scope>
    <scope>IDENTIFICATION BY MASS SPECTROMETRY</scope>
</reference>
<reference key="43">
    <citation type="journal article" date="2018" name="Biochem. Biophys. Res. Commun.">
        <title>Stasimon/Tmem41b localizes to mitochondria-associated ER membranes and is essential for mouse embryonic development.</title>
        <authorList>
            <person name="Van Alstyne M."/>
            <person name="Lotti F."/>
            <person name="Dal Mas A."/>
            <person name="Area-Gomez E."/>
            <person name="Pellizzoni L."/>
        </authorList>
    </citation>
    <scope>INTERACTION WITH TMEM41B</scope>
</reference>
<reference key="44">
    <citation type="journal article" date="2018" name="Sci. Rep.">
        <title>Human erythrocytes release ATP by a novel pathway involving VDAC oligomerization independent of pannexin-1.</title>
        <authorList>
            <person name="Marginedas-Freixa I."/>
            <person name="Alvarez C.L."/>
            <person name="Moras M."/>
            <person name="Leal Denis M.F."/>
            <person name="Hattab C."/>
            <person name="Halle F."/>
            <person name="Bihel F."/>
            <person name="Mouro-Chanteloup I."/>
            <person name="Lefevre S.D."/>
            <person name="Le Van Kim C."/>
            <person name="Schwarzbaum P.J."/>
            <person name="Ostuni M.A."/>
        </authorList>
    </citation>
    <scope>FUNCTION</scope>
    <scope>SUBUNIT</scope>
</reference>
<reference key="45">
    <citation type="journal article" date="2019" name="Nat. Commun.">
        <title>Ceramides bind VDAC2 to trigger mitochondrial apoptosis.</title>
        <authorList>
            <person name="Dadsena S."/>
            <person name="Bockelmann S."/>
            <person name="Mina J.G.M."/>
            <person name="Hassan D.G."/>
            <person name="Korneev S."/>
            <person name="Razzera G."/>
            <person name="Jahn H."/>
            <person name="Niekamp P."/>
            <person name="Mueller D."/>
            <person name="Schneider M."/>
            <person name="Tafesse F.G."/>
            <person name="Marrink S.J."/>
            <person name="Melo M.N."/>
            <person name="Holthuis J.C.M."/>
        </authorList>
    </citation>
    <scope>FUNCTION</scope>
    <scope>SUBCELLULAR LOCATION</scope>
    <scope>IDENTIFICATION BY MASS SPECTROMETRY</scope>
    <scope>MUTAGENESIS OF GLU-73</scope>
</reference>
<reference key="46">
    <citation type="journal article" date="2019" name="Sci. Adv.">
        <title>BAP31 regulates mitochondrial function via interaction with Tom40 within ER-mitochondria contact sites.</title>
        <authorList>
            <person name="Namba T."/>
        </authorList>
    </citation>
    <scope>INTERACTION WITH BCAP31</scope>
    <scope>SUBCELLULAR LOCATION</scope>
</reference>
<reference key="47">
    <citation type="journal article" date="2020" name="Proc. Natl. Acad. Sci. U.S.A.">
        <title>Decision between mitophagy and apoptosis by Parkin via VDAC1 ubiquitination.</title>
        <authorList>
            <person name="Ham S.J."/>
            <person name="Lee D."/>
            <person name="Yoo H."/>
            <person name="Jun K."/>
            <person name="Shin H."/>
            <person name="Chung J."/>
        </authorList>
    </citation>
    <scope>FUNCTION</scope>
    <scope>UBIQUITINATION AT LYS-12; LYS-20; LYS-53; LYS-109; LYS-110 AND LYS-274</scope>
    <scope>MUTAGENESIS OF LYS-12; LYS-20; LYS-53; 109-LYS-LYS-110 AND LYS-274</scope>
</reference>
<reference key="48">
    <citation type="journal article" date="2023" name="Nat. Commun.">
        <title>Phospholipids are imported into mitochondria by VDAC, a dimeric beta barrel scramblase.</title>
        <authorList>
            <person name="Jahn H."/>
            <person name="Bartos L."/>
            <person name="Dearden G.I."/>
            <person name="Dittman J.S."/>
            <person name="Holthuis J.C.M."/>
            <person name="Vacha R."/>
            <person name="Menon A.K."/>
        </authorList>
    </citation>
    <scope>FUNCTION</scope>
    <scope>TRANSPORTER ACTIVITY</scope>
    <scope>SUBUNIT</scope>
</reference>
<reference evidence="37" key="49">
    <citation type="journal article" date="2008" name="Proc. Natl. Acad. Sci. U.S.A.">
        <title>Structure of the human voltage-dependent anion channel.</title>
        <authorList>
            <person name="Bayrhuber M."/>
            <person name="Meins T."/>
            <person name="Habeck M."/>
            <person name="Becker S."/>
            <person name="Giller K."/>
            <person name="Villinger S."/>
            <person name="Vonrhein C."/>
            <person name="Griesinger C."/>
            <person name="Zweckstetter M."/>
            <person name="Zeth K."/>
        </authorList>
    </citation>
    <scope>X-RAY CRYSTALLOGRAPHY (4.1 ANGSTROMS) OF 2-283</scope>
    <scope>STRUCTURE BY NMR</scope>
    <scope>DOMAIN</scope>
</reference>
<reference evidence="38" key="50">
    <citation type="journal article" date="2008" name="Science">
        <title>Solution structure of the integral human membrane protein VDAC-1 in detergent micelles.</title>
        <authorList>
            <person name="Hiller S."/>
            <person name="Garces R.G."/>
            <person name="Malia T.J."/>
            <person name="Orekhov V.Y."/>
            <person name="Colombini M."/>
            <person name="Wagner G."/>
        </authorList>
    </citation>
    <scope>STRUCTURE BY NMR</scope>
    <scope>FUNCTION</scope>
    <scope>INTERACTION WITH BCL2L1</scope>
    <scope>NADH-BINDING</scope>
    <scope>DOMAIN</scope>
</reference>